<name>CHD7_HUMAN</name>
<sequence>MADPGMMSLFGEDGNIFSEGLEGLGECGYPENPVNPMGQQMPIDQGFASLQPSLHHPSTNQNQTKLTHFDHYNQYEQQKMHLMDQPNRMMSNTPGNGLASPHSQYHTPPVPQVPHGGSGGGQMGVYPGMQNERHGQSFVDSSSMWGPRAVQVPDQIRAPYQQQQPQPQPPQPAPSGPPAQGHPQHMQQMGSYMARGDFSMQQHGQPQQRMSQFSQGQEGLNQGNPFIATSGPGHLSHVPQQSPSMAPSLRHSVQQFHHHPSTALHGESVAHSPRFSPNPPQQGAVRPQTLNFSSRSQTVPSPTINNSGQYSRYPYSNLNQGLVNNTGMNQNLGLTNNTPMNQSVPRYPNAVGFPSNSGQGLMHQQPIHPSGSLNQMNTQTMHPSQPQGTYASPPPMSPMKAMSNPAGTPPPQVRPGSAGIPMEVGSYPNMPHPQPSHQPPGAMGIGQRNMGPRNMQQSRPFIGMSSAPRELTGHMRPNGCPGVGLGDPQAIQERLIPGQQHPGQQPSFQQLPTCPPLQPHPGLHHQSSPPHPHHQPWAQLHPSPQNTPQKVPVHQHSPSEPFLEKPVPDMTQVSGPNAQLVKSDDYLPSIEQQPQQKKKKKKNNHIVAEDPSKGFGKDDFPGGVDNQELNRNSLDGSQEEKKKKKRSKAKKDPKEPKEPKEKKEPKEPKTPKAPKIPKEPKEKKAKTATPKPKSSKKSSNKKPDSEASALKKKVNKGKTEGSENSDLDKTPPPSPPPEEDEDPGVQKRRSSRQVKRKRYTEDLEFKISDEEADDADAAGRDSPSNTSQSEQQESVDAEGPVVEKIMSSRSVKKQKESGEEVEIEEFYVKYKNFSYLHCQWASIEDLEKDKRIQQKIKRFKAKQGQNKFLSEIEDELFNPDYVEVDRIMDFARSTDDRGEPVTHYLVKWCSLPYEDSTWERRQDIDQAKIEEFEKLMSREPETERVERPPADDWKKSESSREYKNNNKLREYQLEGVNWLLFNWYNMRNCILADEMGLGKTIQSITFLYEIYLKGIHGPFLVIAPLSTIPNWEREFRTWTELNVVVYHGSQASRRTIQLYEMYFKDPQGRVIKGSYKFHAIITTFEMILTDCPELRNIPWRCVVIDEAHRLKNRNCKLLEGLKMMDLEHKVLLTGTPLQNTVEELFSLLHFLEPSRFPSETTFMQEFGDLKTEEQVQKLQAILKPMMLRRLKEDVEKNLAPKEETIIEVELTNIQKKYYRAILEKNFTFLSKGGGQANVPNLLNTMMELRKCCNHPYLINGAEEKILEEFKETHNAESPDFQLQAMIQAAGKLVLIDKLLPKLKAGGHRVLIFSQMVRCLDILEDYLIQRRYPYERIDGRVRGNLRQAAIDRFSKPDSDRFVFLLCTRAGGLGINLTAADTCIIFDSDWNPQNDLQAQARCHRIGQSKSVKIYRLITRNSYEREMFDKASLKLGLDKAVLQSMSGRENATNGVQQLSKKEIEDLLRKGAYGALMDEEDEGSKFCEEDIDQILLRRTHTITIESEGKGSTFAKASFVASGNRTDISLDDPNFWQKWAKKAELDIDALNGRNNLVIDTPRVRKQTRLYSAVKEDELMEFSDLESDSEEKPCAKPRRPQDKSQGYARSECFRVEKNLLVYGWGRWTDILSHGRYKRQLTEQDVETICRTILVYCLNHYKGDENIKSFIWDLITPTADGQTRALVNHSGLSAPVPRGRKGKKVKAQSTQPVVQDADWLASCNPDALFQEDSYKKHLKHHCNKVLLRVRMLYYLRQEVIGDQADKILEGADSSEADVWIPEPFHAEVPADWWDKEADKSLLIGVFKHGYEKYNSMRADPALCFLERVGMPDAKAIAAEQRGTDMLADGGDGGEFDREDEDPEYKPTRTPFKDEIDEFANSPSEDKEESMEIHATGKHSESNAELGQLYWPNTSTLTTRLRRLITAYQRSYKRQQMRQEALMKTDRRRRRPREEVRALEAEREAIISEKRQKWTRREEADFYRVVSTFGVIFDPVKQQFDWNQFRAFARLDKKSDESLEKYFSCFVAMCRRVCRMPVKPDDEPPDLSSIIEPITEERASRTLYRIELLRKIREQVLHHPQLGERLKLCQPSLDLPEWWECGRHDRDLLVGAAKHGVSRTDYHILNDPELSFLDAHKNFAQNRGAGNTSSLNPLAVGFVQTPPVISSAHIQDERVLEQAEGKVEEPENPAAKEKCEGKEEEEETDGSGKESKQECEAEASSVKNELKGVEVGADTGSKSISEKGSEEDEEEKLEDDDKSEESSQPEAGAVSRGKNFDEESNASMSTARDETRDGFYMEDGDPSVAQLLHERTFAFSFWPKDRVMINRLDNICEAVLKGKWPVNRRQMFDFQGLIPGYTPTTVDSPLQKRSFAELSMVGQASISGSEDITTSPQLSKEDALNLSVPRQRRRRRRKIEIEAERAAKRRNLMEMVAQLRESQVVSENGQEKVVDLSKASREATSSTSNFSSLSSKFILPNVSTPVSDAFKTQMELLQAGLSRTPTRHLLNGSLVDGEPPMKRRRGRRKNVEGLDLLFMSHKRTSLSAEDAEVTKAFEEDIETPPTRNIPSPGQLDPDTRIPVINLEDGTRLVGEDAPKNKDLVEWLKLHPTYTVDMPSYVPKNADVLFSSFQKPKQKRHRCRNPNKLDINTLTGEERVPVVNKRNGKKMGGAMAPPMKDLPRWLEENPEFAVAPDWTDIVKQSGFVPESMFDRLLTGPVVRGEGASRRGRRPKSEIARAAAAAAAVASTSGINPLLVNSLFAGMDLTSLQNLQNLQSLQLAGLMGFPPGLATAATAGGDAKNPAAVLPLMLPGMAGLPNVFGLGGLLNNPLSAATGNTTTASSQGEPEDSTSKGEEKGNENEDENKDSEKSTDAVSAADSANGSVGAATAPAGLPSNPLAFNPFLLSTMAPGLFYPSMFLPPGLGGLTLPGFPALAGLQNAVGSSEEKAADKAEGGPFKDGETLEGSDAEESLDKTAESSLLEDEIAQGEELDSLDGGDEIENNENDE</sequence>
<dbReference type="EC" id="3.6.4.-" evidence="27"/>
<dbReference type="EMBL" id="GU060498">
    <property type="protein sequence ID" value="ACY35999.1"/>
    <property type="molecule type" value="mRNA"/>
</dbReference>
<dbReference type="EMBL" id="AC023102">
    <property type="status" value="NOT_ANNOTATED_CDS"/>
    <property type="molecule type" value="Genomic_DNA"/>
</dbReference>
<dbReference type="EMBL" id="AC113143">
    <property type="status" value="NOT_ANNOTATED_CDS"/>
    <property type="molecule type" value="Genomic_DNA"/>
</dbReference>
<dbReference type="EMBL" id="AB037837">
    <property type="protein sequence ID" value="BAA92654.1"/>
    <property type="molecule type" value="mRNA"/>
</dbReference>
<dbReference type="EMBL" id="AK000364">
    <property type="protein sequence ID" value="BAA91113.1"/>
    <property type="status" value="ALT_INIT"/>
    <property type="molecule type" value="mRNA"/>
</dbReference>
<dbReference type="EMBL" id="AK000368">
    <property type="protein sequence ID" value="BAA91116.1"/>
    <property type="status" value="ALT_INIT"/>
    <property type="molecule type" value="mRNA"/>
</dbReference>
<dbReference type="EMBL" id="BC014681">
    <property type="protein sequence ID" value="AAH14681.1"/>
    <property type="status" value="ALT_SEQ"/>
    <property type="molecule type" value="mRNA"/>
</dbReference>
<dbReference type="EMBL" id="BC051264">
    <property type="protein sequence ID" value="AAH51264.1"/>
    <property type="molecule type" value="mRNA"/>
</dbReference>
<dbReference type="EMBL" id="BC053890">
    <property type="protein sequence ID" value="AAH53890.1"/>
    <property type="status" value="ALT_INIT"/>
    <property type="molecule type" value="mRNA"/>
</dbReference>
<dbReference type="EMBL" id="BC068000">
    <property type="protein sequence ID" value="AAH68000.1"/>
    <property type="status" value="ALT_INIT"/>
    <property type="molecule type" value="mRNA"/>
</dbReference>
<dbReference type="EMBL" id="BC080627">
    <property type="protein sequence ID" value="AAH80627.1"/>
    <property type="status" value="ALT_SEQ"/>
    <property type="molecule type" value="mRNA"/>
</dbReference>
<dbReference type="EMBL" id="BC110818">
    <property type="protein sequence ID" value="AAI10819.1"/>
    <property type="status" value="ALT_SEQ"/>
    <property type="molecule type" value="mRNA"/>
</dbReference>
<dbReference type="CCDS" id="CCDS47865.1">
    <molecule id="Q9P2D1-1"/>
</dbReference>
<dbReference type="CCDS" id="CCDS83299.1">
    <molecule id="Q9P2D1-4"/>
</dbReference>
<dbReference type="RefSeq" id="NP_001303619.1">
    <molecule id="Q9P2D1-4"/>
    <property type="nucleotide sequence ID" value="NM_001316690.1"/>
</dbReference>
<dbReference type="RefSeq" id="NP_060250.2">
    <molecule id="Q9P2D1-1"/>
    <property type="nucleotide sequence ID" value="NM_017780.3"/>
</dbReference>
<dbReference type="PDB" id="2CKC">
    <property type="method" value="NMR"/>
    <property type="chains" value="A=2563-2622"/>
</dbReference>
<dbReference type="PDB" id="2V0E">
    <property type="method" value="NMR"/>
    <property type="chains" value="A=2561-2614"/>
</dbReference>
<dbReference type="PDB" id="2V0F">
    <property type="method" value="NMR"/>
    <property type="chains" value="A=2631-2715"/>
</dbReference>
<dbReference type="PDBsum" id="2CKC"/>
<dbReference type="PDBsum" id="2V0E"/>
<dbReference type="PDBsum" id="2V0F"/>
<dbReference type="SMR" id="Q9P2D1"/>
<dbReference type="BioGRID" id="120775">
    <property type="interactions" value="147"/>
</dbReference>
<dbReference type="DIP" id="DIP-48685N"/>
<dbReference type="FunCoup" id="Q9P2D1">
    <property type="interactions" value="2143"/>
</dbReference>
<dbReference type="IntAct" id="Q9P2D1">
    <property type="interactions" value="76"/>
</dbReference>
<dbReference type="MINT" id="Q9P2D1"/>
<dbReference type="STRING" id="9606.ENSP00000392028"/>
<dbReference type="GlyCosmos" id="Q9P2D1">
    <property type="glycosylation" value="1 site, 1 glycan"/>
</dbReference>
<dbReference type="GlyGen" id="Q9P2D1">
    <property type="glycosylation" value="8 sites, 2 N-linked glycans (2 sites), 1 O-linked glycan (6 sites)"/>
</dbReference>
<dbReference type="iPTMnet" id="Q9P2D1"/>
<dbReference type="MetOSite" id="Q9P2D1"/>
<dbReference type="PhosphoSitePlus" id="Q9P2D1"/>
<dbReference type="SwissPalm" id="Q9P2D1"/>
<dbReference type="BioMuta" id="CHD7"/>
<dbReference type="DMDM" id="148877246"/>
<dbReference type="jPOST" id="Q9P2D1"/>
<dbReference type="MassIVE" id="Q9P2D1"/>
<dbReference type="PaxDb" id="9606-ENSP00000392028"/>
<dbReference type="PeptideAtlas" id="Q9P2D1"/>
<dbReference type="ProteomicsDB" id="22566"/>
<dbReference type="ProteomicsDB" id="83773">
    <molecule id="Q9P2D1-1"/>
</dbReference>
<dbReference type="ProteomicsDB" id="83774">
    <molecule id="Q9P2D1-2"/>
</dbReference>
<dbReference type="Pumba" id="Q9P2D1"/>
<dbReference type="ABCD" id="Q9P2D1">
    <property type="antibodies" value="1 sequenced antibody"/>
</dbReference>
<dbReference type="Antibodypedia" id="24678">
    <property type="antibodies" value="157 antibodies from 29 providers"/>
</dbReference>
<dbReference type="DNASU" id="55636"/>
<dbReference type="Ensembl" id="ENST00000423902.7">
    <molecule id="Q9P2D1-1"/>
    <property type="protein sequence ID" value="ENSP00000392028.1"/>
    <property type="gene ID" value="ENSG00000171316.14"/>
</dbReference>
<dbReference type="Ensembl" id="ENST00000524602.5">
    <molecule id="Q9P2D1-4"/>
    <property type="protein sequence ID" value="ENSP00000437061.1"/>
    <property type="gene ID" value="ENSG00000171316.14"/>
</dbReference>
<dbReference type="Ensembl" id="ENST00000525508.1">
    <molecule id="Q9P2D1-2"/>
    <property type="protein sequence ID" value="ENSP00000436027.1"/>
    <property type="gene ID" value="ENSG00000171316.14"/>
</dbReference>
<dbReference type="GeneID" id="55636"/>
<dbReference type="KEGG" id="hsa:55636"/>
<dbReference type="MANE-Select" id="ENST00000423902.7">
    <property type="protein sequence ID" value="ENSP00000392028.1"/>
    <property type="RefSeq nucleotide sequence ID" value="NM_017780.4"/>
    <property type="RefSeq protein sequence ID" value="NP_060250.2"/>
</dbReference>
<dbReference type="UCSC" id="uc003xue.4">
    <molecule id="Q9P2D1-1"/>
    <property type="organism name" value="human"/>
</dbReference>
<dbReference type="AGR" id="HGNC:20626"/>
<dbReference type="CTD" id="55636"/>
<dbReference type="DisGeNET" id="55636"/>
<dbReference type="GeneCards" id="CHD7"/>
<dbReference type="GeneReviews" id="CHD7"/>
<dbReference type="HGNC" id="HGNC:20626">
    <property type="gene designation" value="CHD7"/>
</dbReference>
<dbReference type="HPA" id="ENSG00000171316">
    <property type="expression patterns" value="Tissue enhanced (brain)"/>
</dbReference>
<dbReference type="MalaCards" id="CHD7"/>
<dbReference type="MIM" id="214800">
    <property type="type" value="phenotype"/>
</dbReference>
<dbReference type="MIM" id="608765">
    <property type="type" value="phenotype"/>
</dbReference>
<dbReference type="MIM" id="608892">
    <property type="type" value="gene"/>
</dbReference>
<dbReference type="MIM" id="612370">
    <property type="type" value="phenotype"/>
</dbReference>
<dbReference type="neXtProt" id="NX_Q9P2D1"/>
<dbReference type="OpenTargets" id="ENSG00000171316"/>
<dbReference type="Orphanet" id="138">
    <property type="disease" value="CHARGE syndrome"/>
</dbReference>
<dbReference type="Orphanet" id="478">
    <property type="disease" value="Kallmann syndrome"/>
</dbReference>
<dbReference type="Orphanet" id="432">
    <property type="disease" value="Normosmic congenital hypogonadotropic hypogonadism"/>
</dbReference>
<dbReference type="Orphanet" id="39041">
    <property type="disease" value="Omenn syndrome"/>
</dbReference>
<dbReference type="PharmGKB" id="PA134948695"/>
<dbReference type="VEuPathDB" id="HostDB:ENSG00000171316"/>
<dbReference type="eggNOG" id="KOG0384">
    <property type="taxonomic scope" value="Eukaryota"/>
</dbReference>
<dbReference type="GeneTree" id="ENSGT00940000153649"/>
<dbReference type="HOGENOM" id="CLU_000315_5_0_1"/>
<dbReference type="InParanoid" id="Q9P2D1"/>
<dbReference type="OMA" id="AFVAMCK"/>
<dbReference type="OrthoDB" id="5857104at2759"/>
<dbReference type="PAN-GO" id="Q9P2D1">
    <property type="GO annotations" value="14 GO annotations based on evolutionary models"/>
</dbReference>
<dbReference type="PhylomeDB" id="Q9P2D1"/>
<dbReference type="TreeFam" id="TF313572"/>
<dbReference type="PathwayCommons" id="Q9P2D1"/>
<dbReference type="SignaLink" id="Q9P2D1"/>
<dbReference type="SIGNOR" id="Q9P2D1"/>
<dbReference type="BioGRID-ORCS" id="55636">
    <property type="hits" value="44 hits in 1192 CRISPR screens"/>
</dbReference>
<dbReference type="CD-CODE" id="91857CE7">
    <property type="entry name" value="Nucleolus"/>
</dbReference>
<dbReference type="ChiTaRS" id="CHD7">
    <property type="organism name" value="human"/>
</dbReference>
<dbReference type="EvolutionaryTrace" id="Q9P2D1"/>
<dbReference type="GeneWiki" id="CHD7"/>
<dbReference type="GenomeRNAi" id="55636"/>
<dbReference type="Pharos" id="Q9P2D1">
    <property type="development level" value="Tbio"/>
</dbReference>
<dbReference type="PRO" id="PR:Q9P2D1"/>
<dbReference type="Proteomes" id="UP000005640">
    <property type="component" value="Chromosome 8"/>
</dbReference>
<dbReference type="RNAct" id="Q9P2D1">
    <property type="molecule type" value="protein"/>
</dbReference>
<dbReference type="Bgee" id="ENSG00000171316">
    <property type="expression patterns" value="Expressed in secondary oocyte and 197 other cell types or tissues"/>
</dbReference>
<dbReference type="ExpressionAtlas" id="Q9P2D1">
    <property type="expression patterns" value="baseline and differential"/>
</dbReference>
<dbReference type="GO" id="GO:0000785">
    <property type="term" value="C:chromatin"/>
    <property type="evidence" value="ECO:0000318"/>
    <property type="project" value="GO_Central"/>
</dbReference>
<dbReference type="GO" id="GO:0005730">
    <property type="term" value="C:nucleolus"/>
    <property type="evidence" value="ECO:0000314"/>
    <property type="project" value="HPA"/>
</dbReference>
<dbReference type="GO" id="GO:0005654">
    <property type="term" value="C:nucleoplasm"/>
    <property type="evidence" value="ECO:0000314"/>
    <property type="project" value="HPA"/>
</dbReference>
<dbReference type="GO" id="GO:0005634">
    <property type="term" value="C:nucleus"/>
    <property type="evidence" value="ECO:0000314"/>
    <property type="project" value="UniProtKB"/>
</dbReference>
<dbReference type="GO" id="GO:0005524">
    <property type="term" value="F:ATP binding"/>
    <property type="evidence" value="ECO:0007669"/>
    <property type="project" value="UniProtKB-KW"/>
</dbReference>
<dbReference type="GO" id="GO:0016887">
    <property type="term" value="F:ATP hydrolysis activity"/>
    <property type="evidence" value="ECO:0000318"/>
    <property type="project" value="GO_Central"/>
</dbReference>
<dbReference type="GO" id="GO:0140658">
    <property type="term" value="F:ATP-dependent chromatin remodeler activity"/>
    <property type="evidence" value="ECO:0000318"/>
    <property type="project" value="GO_Central"/>
</dbReference>
<dbReference type="GO" id="GO:0003682">
    <property type="term" value="F:chromatin binding"/>
    <property type="evidence" value="ECO:0000318"/>
    <property type="project" value="GO_Central"/>
</dbReference>
<dbReference type="GO" id="GO:0003677">
    <property type="term" value="F:DNA binding"/>
    <property type="evidence" value="ECO:0000318"/>
    <property type="project" value="GO_Central"/>
</dbReference>
<dbReference type="GO" id="GO:0004386">
    <property type="term" value="F:helicase activity"/>
    <property type="evidence" value="ECO:0007669"/>
    <property type="project" value="UniProtKB-KW"/>
</dbReference>
<dbReference type="GO" id="GO:0042393">
    <property type="term" value="F:histone binding"/>
    <property type="evidence" value="ECO:0000318"/>
    <property type="project" value="GO_Central"/>
</dbReference>
<dbReference type="GO" id="GO:1990841">
    <property type="term" value="F:promoter-specific chromatin binding"/>
    <property type="evidence" value="ECO:0007669"/>
    <property type="project" value="Ensembl"/>
</dbReference>
<dbReference type="GO" id="GO:0000978">
    <property type="term" value="F:RNA polymerase II cis-regulatory region sequence-specific DNA binding"/>
    <property type="evidence" value="ECO:0007669"/>
    <property type="project" value="Ensembl"/>
</dbReference>
<dbReference type="GO" id="GO:0007512">
    <property type="term" value="P:adult heart development"/>
    <property type="evidence" value="ECO:0007669"/>
    <property type="project" value="Ensembl"/>
</dbReference>
<dbReference type="GO" id="GO:0007628">
    <property type="term" value="P:adult walking behavior"/>
    <property type="evidence" value="ECO:0007669"/>
    <property type="project" value="Ensembl"/>
</dbReference>
<dbReference type="GO" id="GO:0035909">
    <property type="term" value="P:aorta morphogenesis"/>
    <property type="evidence" value="ECO:0007669"/>
    <property type="project" value="Ensembl"/>
</dbReference>
<dbReference type="GO" id="GO:0036302">
    <property type="term" value="P:atrioventricular canal development"/>
    <property type="evidence" value="ECO:0007669"/>
    <property type="project" value="Ensembl"/>
</dbReference>
<dbReference type="GO" id="GO:0008015">
    <property type="term" value="P:blood circulation"/>
    <property type="evidence" value="ECO:0007669"/>
    <property type="project" value="Ensembl"/>
</dbReference>
<dbReference type="GO" id="GO:0001974">
    <property type="term" value="P:blood vessel remodeling"/>
    <property type="evidence" value="ECO:0007669"/>
    <property type="project" value="Ensembl"/>
</dbReference>
<dbReference type="GO" id="GO:0060411">
    <property type="term" value="P:cardiac septum morphogenesis"/>
    <property type="evidence" value="ECO:0007669"/>
    <property type="project" value="Ensembl"/>
</dbReference>
<dbReference type="GO" id="GO:0007417">
    <property type="term" value="P:central nervous system development"/>
    <property type="evidence" value="ECO:0000315"/>
    <property type="project" value="BHF-UCL"/>
</dbReference>
<dbReference type="GO" id="GO:0043009">
    <property type="term" value="P:chordate embryonic development"/>
    <property type="evidence" value="ECO:0000318"/>
    <property type="project" value="GO_Central"/>
</dbReference>
<dbReference type="GO" id="GO:0006338">
    <property type="term" value="P:chromatin remodeling"/>
    <property type="evidence" value="ECO:0000318"/>
    <property type="project" value="GO_Central"/>
</dbReference>
<dbReference type="GO" id="GO:0050890">
    <property type="term" value="P:cognition"/>
    <property type="evidence" value="ECO:0000315"/>
    <property type="project" value="BHF-UCL"/>
</dbReference>
<dbReference type="GO" id="GO:0021545">
    <property type="term" value="P:cranial nerve development"/>
    <property type="evidence" value="ECO:0000315"/>
    <property type="project" value="BHF-UCL"/>
</dbReference>
<dbReference type="GO" id="GO:0035116">
    <property type="term" value="P:embryonic hindlimb morphogenesis"/>
    <property type="evidence" value="ECO:0007669"/>
    <property type="project" value="Ensembl"/>
</dbReference>
<dbReference type="GO" id="GO:0060429">
    <property type="term" value="P:epithelium development"/>
    <property type="evidence" value="ECO:0007669"/>
    <property type="project" value="Ensembl"/>
</dbReference>
<dbReference type="GO" id="GO:0060324">
    <property type="term" value="P:face development"/>
    <property type="evidence" value="ECO:0000315"/>
    <property type="project" value="BHF-UCL"/>
</dbReference>
<dbReference type="GO" id="GO:0030540">
    <property type="term" value="P:female genitalia development"/>
    <property type="evidence" value="ECO:0007669"/>
    <property type="project" value="Ensembl"/>
</dbReference>
<dbReference type="GO" id="GO:0048806">
    <property type="term" value="P:genitalia development"/>
    <property type="evidence" value="ECO:0000315"/>
    <property type="project" value="BHF-UCL"/>
</dbReference>
<dbReference type="GO" id="GO:0003007">
    <property type="term" value="P:heart morphogenesis"/>
    <property type="evidence" value="ECO:0000315"/>
    <property type="project" value="BHF-UCL"/>
</dbReference>
<dbReference type="GO" id="GO:0001701">
    <property type="term" value="P:in utero embryonic development"/>
    <property type="evidence" value="ECO:0000315"/>
    <property type="project" value="BHF-UCL"/>
</dbReference>
<dbReference type="GO" id="GO:0042472">
    <property type="term" value="P:inner ear morphogenesis"/>
    <property type="evidence" value="ECO:0000315"/>
    <property type="project" value="BHF-UCL"/>
</dbReference>
<dbReference type="GO" id="GO:0060384">
    <property type="term" value="P:innervation"/>
    <property type="evidence" value="ECO:0007669"/>
    <property type="project" value="Ensembl"/>
</dbReference>
<dbReference type="GO" id="GO:0060173">
    <property type="term" value="P:limb development"/>
    <property type="evidence" value="ECO:0000315"/>
    <property type="project" value="BHF-UCL"/>
</dbReference>
<dbReference type="GO" id="GO:0043584">
    <property type="term" value="P:nose development"/>
    <property type="evidence" value="ECO:0000315"/>
    <property type="project" value="BHF-UCL"/>
</dbReference>
<dbReference type="GO" id="GO:0042048">
    <property type="term" value="P:olfactory behavior"/>
    <property type="evidence" value="ECO:0007669"/>
    <property type="project" value="Ensembl"/>
</dbReference>
<dbReference type="GO" id="GO:0021772">
    <property type="term" value="P:olfactory bulb development"/>
    <property type="evidence" value="ECO:0007669"/>
    <property type="project" value="Ensembl"/>
</dbReference>
<dbReference type="GO" id="GO:0021553">
    <property type="term" value="P:olfactory nerve development"/>
    <property type="evidence" value="ECO:0007669"/>
    <property type="project" value="Ensembl"/>
</dbReference>
<dbReference type="GO" id="GO:0040018">
    <property type="term" value="P:positive regulation of multicellular organism growth"/>
    <property type="evidence" value="ECO:0007669"/>
    <property type="project" value="Ensembl"/>
</dbReference>
<dbReference type="GO" id="GO:0045944">
    <property type="term" value="P:positive regulation of transcription by RNA polymerase II"/>
    <property type="evidence" value="ECO:0007669"/>
    <property type="project" value="Ensembl"/>
</dbReference>
<dbReference type="GO" id="GO:0006355">
    <property type="term" value="P:regulation of DNA-templated transcription"/>
    <property type="evidence" value="ECO:0000303"/>
    <property type="project" value="BHF-UCL"/>
</dbReference>
<dbReference type="GO" id="GO:0010468">
    <property type="term" value="P:regulation of gene expression"/>
    <property type="evidence" value="ECO:0000318"/>
    <property type="project" value="GO_Central"/>
</dbReference>
<dbReference type="GO" id="GO:0060123">
    <property type="term" value="P:regulation of growth hormone secretion"/>
    <property type="evidence" value="ECO:0000315"/>
    <property type="project" value="BHF-UCL"/>
</dbReference>
<dbReference type="GO" id="GO:0050767">
    <property type="term" value="P:regulation of neurogenesis"/>
    <property type="evidence" value="ECO:0007669"/>
    <property type="project" value="Ensembl"/>
</dbReference>
<dbReference type="GO" id="GO:0010880">
    <property type="term" value="P:regulation of release of sequestered calcium ion into cytosol by sarcoplasmic reticulum"/>
    <property type="evidence" value="ECO:0007669"/>
    <property type="project" value="Ensembl"/>
</dbReference>
<dbReference type="GO" id="GO:0009617">
    <property type="term" value="P:response to bacterium"/>
    <property type="evidence" value="ECO:0007669"/>
    <property type="project" value="Ensembl"/>
</dbReference>
<dbReference type="GO" id="GO:0060041">
    <property type="term" value="P:retina development in camera-type eye"/>
    <property type="evidence" value="ECO:0000315"/>
    <property type="project" value="BHF-UCL"/>
</dbReference>
<dbReference type="GO" id="GO:0003226">
    <property type="term" value="P:right ventricular compact myocardium morphogenesis"/>
    <property type="evidence" value="ECO:0007669"/>
    <property type="project" value="Ensembl"/>
</dbReference>
<dbReference type="GO" id="GO:0006364">
    <property type="term" value="P:rRNA processing"/>
    <property type="evidence" value="ECO:0007669"/>
    <property type="project" value="UniProtKB-KW"/>
</dbReference>
<dbReference type="GO" id="GO:0062009">
    <property type="term" value="P:secondary palate development"/>
    <property type="evidence" value="ECO:0000315"/>
    <property type="project" value="BHF-UCL"/>
</dbReference>
<dbReference type="GO" id="GO:0048752">
    <property type="term" value="P:semicircular canal morphogenesis"/>
    <property type="evidence" value="ECO:0007669"/>
    <property type="project" value="Ensembl"/>
</dbReference>
<dbReference type="GO" id="GO:0007605">
    <property type="term" value="P:sensory perception of sound"/>
    <property type="evidence" value="ECO:0007669"/>
    <property type="project" value="Ensembl"/>
</dbReference>
<dbReference type="GO" id="GO:0001501">
    <property type="term" value="P:skeletal system development"/>
    <property type="evidence" value="ECO:0000315"/>
    <property type="project" value="BHF-UCL"/>
</dbReference>
<dbReference type="GO" id="GO:0030217">
    <property type="term" value="P:T cell differentiation"/>
    <property type="evidence" value="ECO:0000315"/>
    <property type="project" value="BHF-UCL"/>
</dbReference>
<dbReference type="GO" id="GO:0006366">
    <property type="term" value="P:transcription by RNA polymerase II"/>
    <property type="evidence" value="ECO:0007669"/>
    <property type="project" value="Ensembl"/>
</dbReference>
<dbReference type="GO" id="GO:0003222">
    <property type="term" value="P:ventricular trabecula myocardium morphogenesis"/>
    <property type="evidence" value="ECO:0007669"/>
    <property type="project" value="Ensembl"/>
</dbReference>
<dbReference type="CDD" id="cd18668">
    <property type="entry name" value="CD1_tandem_CHD5-9_like"/>
    <property type="match status" value="1"/>
</dbReference>
<dbReference type="CDD" id="cd18663">
    <property type="entry name" value="CD2_tandem_CHD5-9_like"/>
    <property type="match status" value="1"/>
</dbReference>
<dbReference type="CDD" id="cd18793">
    <property type="entry name" value="SF2_C_SNF"/>
    <property type="match status" value="1"/>
</dbReference>
<dbReference type="FunFam" id="1.10.10.60:FF:000184">
    <property type="entry name" value="Chromodomain helicase DNA binding protein 6"/>
    <property type="match status" value="1"/>
</dbReference>
<dbReference type="FunFam" id="2.40.50.40:FF:000001">
    <property type="entry name" value="chromodomain-helicase-DNA-binding protein 8 isoform X4"/>
    <property type="match status" value="1"/>
</dbReference>
<dbReference type="FunFam" id="2.40.50.40:FF:000005">
    <property type="entry name" value="chromodomain-helicase-DNA-binding protein 8 isoform X4"/>
    <property type="match status" value="1"/>
</dbReference>
<dbReference type="FunFam" id="3.40.50.10810:FF:000003">
    <property type="entry name" value="chromodomain-helicase-DNA-binding protein 8 isoform X4"/>
    <property type="match status" value="1"/>
</dbReference>
<dbReference type="FunFam" id="3.40.5.120:FF:000002">
    <property type="entry name" value="chromodomain-helicase-DNA-binding protein 9 isoform X1"/>
    <property type="match status" value="1"/>
</dbReference>
<dbReference type="FunFam" id="3.40.5.120:FF:000003">
    <property type="entry name" value="chromodomain-helicase-DNA-binding protein 9 isoform X1"/>
    <property type="match status" value="1"/>
</dbReference>
<dbReference type="FunFam" id="3.40.50.300:FF:000015">
    <property type="entry name" value="chromodomain-helicase-DNA-binding protein 9 isoform X1"/>
    <property type="match status" value="1"/>
</dbReference>
<dbReference type="Gene3D" id="2.40.50.40">
    <property type="match status" value="2"/>
</dbReference>
<dbReference type="Gene3D" id="3.40.5.120">
    <property type="match status" value="2"/>
</dbReference>
<dbReference type="Gene3D" id="1.10.10.60">
    <property type="entry name" value="Homeodomain-like"/>
    <property type="match status" value="2"/>
</dbReference>
<dbReference type="Gene3D" id="3.40.50.300">
    <property type="entry name" value="P-loop containing nucleotide triphosphate hydrolases"/>
    <property type="match status" value="1"/>
</dbReference>
<dbReference type="Gene3D" id="3.40.50.10810">
    <property type="entry name" value="Tandem AAA-ATPase domain"/>
    <property type="match status" value="1"/>
</dbReference>
<dbReference type="InterPro" id="IPR006576">
    <property type="entry name" value="BRK_domain"/>
</dbReference>
<dbReference type="InterPro" id="IPR037259">
    <property type="entry name" value="BRK_sf"/>
</dbReference>
<dbReference type="InterPro" id="IPR051493">
    <property type="entry name" value="CHD"/>
</dbReference>
<dbReference type="InterPro" id="IPR016197">
    <property type="entry name" value="Chromo-like_dom_sf"/>
</dbReference>
<dbReference type="InterPro" id="IPR000953">
    <property type="entry name" value="Chromo/chromo_shadow_dom"/>
</dbReference>
<dbReference type="InterPro" id="IPR023780">
    <property type="entry name" value="Chromo_domain"/>
</dbReference>
<dbReference type="InterPro" id="IPR014001">
    <property type="entry name" value="Helicase_ATP-bd"/>
</dbReference>
<dbReference type="InterPro" id="IPR001650">
    <property type="entry name" value="Helicase_C-like"/>
</dbReference>
<dbReference type="InterPro" id="IPR056342">
    <property type="entry name" value="HTH_CHD6-9"/>
</dbReference>
<dbReference type="InterPro" id="IPR027417">
    <property type="entry name" value="P-loop_NTPase"/>
</dbReference>
<dbReference type="InterPro" id="IPR038718">
    <property type="entry name" value="SNF2-like_sf"/>
</dbReference>
<dbReference type="InterPro" id="IPR049730">
    <property type="entry name" value="SNF2/RAD54-like_C"/>
</dbReference>
<dbReference type="InterPro" id="IPR000330">
    <property type="entry name" value="SNF2_N"/>
</dbReference>
<dbReference type="PANTHER" id="PTHR46850">
    <property type="entry name" value="CHROMODOMAIN-HELICASE-DNA-BINDING PROTEIN 9"/>
    <property type="match status" value="1"/>
</dbReference>
<dbReference type="PANTHER" id="PTHR46850:SF1">
    <property type="entry name" value="CHROMODOMAIN-HELICASE-DNA-BINDING PROTEIN 9"/>
    <property type="match status" value="1"/>
</dbReference>
<dbReference type="Pfam" id="PF07533">
    <property type="entry name" value="BRK"/>
    <property type="match status" value="2"/>
</dbReference>
<dbReference type="Pfam" id="PF00385">
    <property type="entry name" value="Chromo"/>
    <property type="match status" value="2"/>
</dbReference>
<dbReference type="Pfam" id="PF00271">
    <property type="entry name" value="Helicase_C"/>
    <property type="match status" value="1"/>
</dbReference>
<dbReference type="Pfam" id="PF23078">
    <property type="entry name" value="HTH_CHD6-9"/>
    <property type="match status" value="1"/>
</dbReference>
<dbReference type="Pfam" id="PF00176">
    <property type="entry name" value="SNF2-rel_dom"/>
    <property type="match status" value="1"/>
</dbReference>
<dbReference type="SMART" id="SM00592">
    <property type="entry name" value="BRK"/>
    <property type="match status" value="2"/>
</dbReference>
<dbReference type="SMART" id="SM00298">
    <property type="entry name" value="CHROMO"/>
    <property type="match status" value="2"/>
</dbReference>
<dbReference type="SMART" id="SM00487">
    <property type="entry name" value="DEXDc"/>
    <property type="match status" value="1"/>
</dbReference>
<dbReference type="SMART" id="SM00490">
    <property type="entry name" value="HELICc"/>
    <property type="match status" value="1"/>
</dbReference>
<dbReference type="SUPFAM" id="SSF160481">
    <property type="entry name" value="BRK domain-like"/>
    <property type="match status" value="2"/>
</dbReference>
<dbReference type="SUPFAM" id="SSF54160">
    <property type="entry name" value="Chromo domain-like"/>
    <property type="match status" value="2"/>
</dbReference>
<dbReference type="SUPFAM" id="SSF52540">
    <property type="entry name" value="P-loop containing nucleoside triphosphate hydrolases"/>
    <property type="match status" value="2"/>
</dbReference>
<dbReference type="PROSITE" id="PS50013">
    <property type="entry name" value="CHROMO_2"/>
    <property type="match status" value="2"/>
</dbReference>
<dbReference type="PROSITE" id="PS51192">
    <property type="entry name" value="HELICASE_ATP_BIND_1"/>
    <property type="match status" value="1"/>
</dbReference>
<dbReference type="PROSITE" id="PS51194">
    <property type="entry name" value="HELICASE_CTER"/>
    <property type="match status" value="1"/>
</dbReference>
<gene>
    <name type="primary">CHD7</name>
    <name type="synonym">KIAA1416</name>
</gene>
<reference key="1">
    <citation type="submission" date="2009-10" db="EMBL/GenBank/DDBJ databases">
        <title>Cloning and characterization of a novel alternatively spliced transcript of the human putative helicase CHD7.</title>
        <authorList>
            <person name="Colin C."/>
            <person name="Correa R.G."/>
            <person name="Tobaruella F.S."/>
            <person name="Sogayar M.C."/>
            <person name="Demasi M.A."/>
        </authorList>
    </citation>
    <scope>NUCLEOTIDE SEQUENCE [MRNA] (ISOFORM 4)</scope>
    <scope>ALTERNATIVE SPLICING</scope>
</reference>
<reference key="2">
    <citation type="journal article" date="2006" name="Nature">
        <title>DNA sequence and analysis of human chromosome 8.</title>
        <authorList>
            <person name="Nusbaum C."/>
            <person name="Mikkelsen T.S."/>
            <person name="Zody M.C."/>
            <person name="Asakawa S."/>
            <person name="Taudien S."/>
            <person name="Garber M."/>
            <person name="Kodira C.D."/>
            <person name="Schueler M.G."/>
            <person name="Shimizu A."/>
            <person name="Whittaker C.A."/>
            <person name="Chang J.L."/>
            <person name="Cuomo C.A."/>
            <person name="Dewar K."/>
            <person name="FitzGerald M.G."/>
            <person name="Yang X."/>
            <person name="Allen N.R."/>
            <person name="Anderson S."/>
            <person name="Asakawa T."/>
            <person name="Blechschmidt K."/>
            <person name="Bloom T."/>
            <person name="Borowsky M.L."/>
            <person name="Butler J."/>
            <person name="Cook A."/>
            <person name="Corum B."/>
            <person name="DeArellano K."/>
            <person name="DeCaprio D."/>
            <person name="Dooley K.T."/>
            <person name="Dorris L. III"/>
            <person name="Engels R."/>
            <person name="Gloeckner G."/>
            <person name="Hafez N."/>
            <person name="Hagopian D.S."/>
            <person name="Hall J.L."/>
            <person name="Ishikawa S.K."/>
            <person name="Jaffe D.B."/>
            <person name="Kamat A."/>
            <person name="Kudoh J."/>
            <person name="Lehmann R."/>
            <person name="Lokitsang T."/>
            <person name="Macdonald P."/>
            <person name="Major J.E."/>
            <person name="Matthews C.D."/>
            <person name="Mauceli E."/>
            <person name="Menzel U."/>
            <person name="Mihalev A.H."/>
            <person name="Minoshima S."/>
            <person name="Murayama Y."/>
            <person name="Naylor J.W."/>
            <person name="Nicol R."/>
            <person name="Nguyen C."/>
            <person name="O'Leary S.B."/>
            <person name="O'Neill K."/>
            <person name="Parker S.C.J."/>
            <person name="Polley A."/>
            <person name="Raymond C.K."/>
            <person name="Reichwald K."/>
            <person name="Rodriguez J."/>
            <person name="Sasaki T."/>
            <person name="Schilhabel M."/>
            <person name="Siddiqui R."/>
            <person name="Smith C.L."/>
            <person name="Sneddon T.P."/>
            <person name="Talamas J.A."/>
            <person name="Tenzin P."/>
            <person name="Topham K."/>
            <person name="Venkataraman V."/>
            <person name="Wen G."/>
            <person name="Yamazaki S."/>
            <person name="Young S.K."/>
            <person name="Zeng Q."/>
            <person name="Zimmer A.R."/>
            <person name="Rosenthal A."/>
            <person name="Birren B.W."/>
            <person name="Platzer M."/>
            <person name="Shimizu N."/>
            <person name="Lander E.S."/>
        </authorList>
    </citation>
    <scope>NUCLEOTIDE SEQUENCE [LARGE SCALE GENOMIC DNA]</scope>
</reference>
<reference key="3">
    <citation type="journal article" date="2000" name="DNA Res.">
        <title>Prediction of the coding sequences of unidentified human genes. XVI. The complete sequences of 150 new cDNA clones from brain which code for large proteins in vitro.</title>
        <authorList>
            <person name="Nagase T."/>
            <person name="Kikuno R."/>
            <person name="Ishikawa K."/>
            <person name="Hirosawa M."/>
            <person name="Ohara O."/>
        </authorList>
    </citation>
    <scope>NUCLEOTIDE SEQUENCE [LARGE SCALE MRNA] OF 763-2729 (ISOFORM 1)</scope>
    <source>
        <tissue>Brain</tissue>
    </source>
</reference>
<reference key="4">
    <citation type="journal article" date="2002" name="DNA Res.">
        <title>Construction of expression-ready cDNA clones for KIAA genes: manual curation of 330 KIAA cDNA clones.</title>
        <authorList>
            <person name="Nakajima D."/>
            <person name="Okazaki N."/>
            <person name="Yamakawa H."/>
            <person name="Kikuno R."/>
            <person name="Ohara O."/>
            <person name="Nagase T."/>
        </authorList>
    </citation>
    <scope>SEQUENCE REVISION</scope>
</reference>
<reference key="5">
    <citation type="journal article" date="2004" name="Nat. Genet.">
        <title>Complete sequencing and characterization of 21,243 full-length human cDNAs.</title>
        <authorList>
            <person name="Ota T."/>
            <person name="Suzuki Y."/>
            <person name="Nishikawa T."/>
            <person name="Otsuki T."/>
            <person name="Sugiyama T."/>
            <person name="Irie R."/>
            <person name="Wakamatsu A."/>
            <person name="Hayashi K."/>
            <person name="Sato H."/>
            <person name="Nagai K."/>
            <person name="Kimura K."/>
            <person name="Makita H."/>
            <person name="Sekine M."/>
            <person name="Obayashi M."/>
            <person name="Nishi T."/>
            <person name="Shibahara T."/>
            <person name="Tanaka T."/>
            <person name="Ishii S."/>
            <person name="Yamamoto J."/>
            <person name="Saito K."/>
            <person name="Kawai Y."/>
            <person name="Isono Y."/>
            <person name="Nakamura Y."/>
            <person name="Nagahari K."/>
            <person name="Murakami K."/>
            <person name="Yasuda T."/>
            <person name="Iwayanagi T."/>
            <person name="Wagatsuma M."/>
            <person name="Shiratori A."/>
            <person name="Sudo H."/>
            <person name="Hosoiri T."/>
            <person name="Kaku Y."/>
            <person name="Kodaira H."/>
            <person name="Kondo H."/>
            <person name="Sugawara M."/>
            <person name="Takahashi M."/>
            <person name="Kanda K."/>
            <person name="Yokoi T."/>
            <person name="Furuya T."/>
            <person name="Kikkawa E."/>
            <person name="Omura Y."/>
            <person name="Abe K."/>
            <person name="Kamihara K."/>
            <person name="Katsuta N."/>
            <person name="Sato K."/>
            <person name="Tanikawa M."/>
            <person name="Yamazaki M."/>
            <person name="Ninomiya K."/>
            <person name="Ishibashi T."/>
            <person name="Yamashita H."/>
            <person name="Murakawa K."/>
            <person name="Fujimori K."/>
            <person name="Tanai H."/>
            <person name="Kimata M."/>
            <person name="Watanabe M."/>
            <person name="Hiraoka S."/>
            <person name="Chiba Y."/>
            <person name="Ishida S."/>
            <person name="Ono Y."/>
            <person name="Takiguchi S."/>
            <person name="Watanabe S."/>
            <person name="Yosida M."/>
            <person name="Hotuta T."/>
            <person name="Kusano J."/>
            <person name="Kanehori K."/>
            <person name="Takahashi-Fujii A."/>
            <person name="Hara H."/>
            <person name="Tanase T.-O."/>
            <person name="Nomura Y."/>
            <person name="Togiya S."/>
            <person name="Komai F."/>
            <person name="Hara R."/>
            <person name="Takeuchi K."/>
            <person name="Arita M."/>
            <person name="Imose N."/>
            <person name="Musashino K."/>
            <person name="Yuuki H."/>
            <person name="Oshima A."/>
            <person name="Sasaki N."/>
            <person name="Aotsuka S."/>
            <person name="Yoshikawa Y."/>
            <person name="Matsunawa H."/>
            <person name="Ichihara T."/>
            <person name="Shiohata N."/>
            <person name="Sano S."/>
            <person name="Moriya S."/>
            <person name="Momiyama H."/>
            <person name="Satoh N."/>
            <person name="Takami S."/>
            <person name="Terashima Y."/>
            <person name="Suzuki O."/>
            <person name="Nakagawa S."/>
            <person name="Senoh A."/>
            <person name="Mizoguchi H."/>
            <person name="Goto Y."/>
            <person name="Shimizu F."/>
            <person name="Wakebe H."/>
            <person name="Hishigaki H."/>
            <person name="Watanabe T."/>
            <person name="Sugiyama A."/>
            <person name="Takemoto M."/>
            <person name="Kawakami B."/>
            <person name="Yamazaki M."/>
            <person name="Watanabe K."/>
            <person name="Kumagai A."/>
            <person name="Itakura S."/>
            <person name="Fukuzumi Y."/>
            <person name="Fujimori Y."/>
            <person name="Komiyama M."/>
            <person name="Tashiro H."/>
            <person name="Tanigami A."/>
            <person name="Fujiwara T."/>
            <person name="Ono T."/>
            <person name="Yamada K."/>
            <person name="Fujii Y."/>
            <person name="Ozaki K."/>
            <person name="Hirao M."/>
            <person name="Ohmori Y."/>
            <person name="Kawabata A."/>
            <person name="Hikiji T."/>
            <person name="Kobatake N."/>
            <person name="Inagaki H."/>
            <person name="Ikema Y."/>
            <person name="Okamoto S."/>
            <person name="Okitani R."/>
            <person name="Kawakami T."/>
            <person name="Noguchi S."/>
            <person name="Itoh T."/>
            <person name="Shigeta K."/>
            <person name="Senba T."/>
            <person name="Matsumura K."/>
            <person name="Nakajima Y."/>
            <person name="Mizuno T."/>
            <person name="Morinaga M."/>
            <person name="Sasaki M."/>
            <person name="Togashi T."/>
            <person name="Oyama M."/>
            <person name="Hata H."/>
            <person name="Watanabe M."/>
            <person name="Komatsu T."/>
            <person name="Mizushima-Sugano J."/>
            <person name="Satoh T."/>
            <person name="Shirai Y."/>
            <person name="Takahashi Y."/>
            <person name="Nakagawa K."/>
            <person name="Okumura K."/>
            <person name="Nagase T."/>
            <person name="Nomura N."/>
            <person name="Kikuchi H."/>
            <person name="Masuho Y."/>
            <person name="Yamashita R."/>
            <person name="Nakai K."/>
            <person name="Yada T."/>
            <person name="Nakamura Y."/>
            <person name="Ohara O."/>
            <person name="Isogai T."/>
            <person name="Sugano S."/>
        </authorList>
    </citation>
    <scope>NUCLEOTIDE SEQUENCE [LARGE SCALE MRNA] OF 853-2997 (ISOFORM 2)</scope>
    <scope>NUCLEOTIDE SEQUENCE [LARGE SCALE MRNA] OF 2305-2997 (ISOFORM 1)</scope>
    <source>
        <tissue>Hepatoma</tissue>
    </source>
</reference>
<reference key="6">
    <citation type="journal article" date="2004" name="Genome Res.">
        <title>The status, quality, and expansion of the NIH full-length cDNA project: the Mammalian Gene Collection (MGC).</title>
        <authorList>
            <consortium name="The MGC Project Team"/>
        </authorList>
    </citation>
    <scope>NUCLEOTIDE SEQUENCE [LARGE SCALE MRNA] OF 1-639 AND 763-2997 (ISOFORM 1)</scope>
    <source>
        <tissue>Blood</tissue>
        <tissue>Brain</tissue>
        <tissue>Eye</tissue>
        <tissue>Lung</tissue>
        <tissue>Placenta</tissue>
        <tissue>Skin</tissue>
    </source>
</reference>
<reference key="7">
    <citation type="journal article" date="2007" name="Science">
        <title>ATM and ATR substrate analysis reveals extensive protein networks responsive to DNA damage.</title>
        <authorList>
            <person name="Matsuoka S."/>
            <person name="Ballif B.A."/>
            <person name="Smogorzewska A."/>
            <person name="McDonald E.R. III"/>
            <person name="Hurov K.E."/>
            <person name="Luo J."/>
            <person name="Bakalarski C.E."/>
            <person name="Zhao Z."/>
            <person name="Solimini N."/>
            <person name="Lerenthal Y."/>
            <person name="Shiloh Y."/>
            <person name="Gygi S.P."/>
            <person name="Elledge S.J."/>
        </authorList>
    </citation>
    <scope>IDENTIFICATION BY MASS SPECTROMETRY [LARGE SCALE ANALYSIS]</scope>
    <source>
        <tissue>Embryonic kidney</tissue>
    </source>
</reference>
<reference key="8">
    <citation type="journal article" date="2008" name="Proc. Natl. Acad. Sci. U.S.A.">
        <title>A quantitative atlas of mitotic phosphorylation.</title>
        <authorList>
            <person name="Dephoure N."/>
            <person name="Zhou C."/>
            <person name="Villen J."/>
            <person name="Beausoleil S.A."/>
            <person name="Bakalarski C.E."/>
            <person name="Elledge S.J."/>
            <person name="Gygi S.P."/>
        </authorList>
    </citation>
    <scope>PHOSPHORYLATION [LARGE SCALE ANALYSIS] AT SER-2356; SER-2533; THR-2551 AND SER-2559</scope>
    <scope>IDENTIFICATION BY MASS SPECTROMETRY [LARGE SCALE ANALYSIS]</scope>
    <source>
        <tissue>Cervix carcinoma</tissue>
    </source>
</reference>
<reference key="9">
    <citation type="journal article" date="2009" name="Sci. Signal.">
        <title>Quantitative phosphoproteomic analysis of T cell receptor signaling reveals system-wide modulation of protein-protein interactions.</title>
        <authorList>
            <person name="Mayya V."/>
            <person name="Lundgren D.H."/>
            <person name="Hwang S.-I."/>
            <person name="Rezaul K."/>
            <person name="Wu L."/>
            <person name="Eng J.K."/>
            <person name="Rodionov V."/>
            <person name="Han D.K."/>
        </authorList>
    </citation>
    <scope>PHOSPHORYLATION [LARGE SCALE ANALYSIS] AT SER-2559</scope>
    <scope>IDENTIFICATION BY MASS SPECTROMETRY [LARGE SCALE ANALYSIS]</scope>
    <source>
        <tissue>Leukemic T-cell</tissue>
    </source>
</reference>
<reference key="10">
    <citation type="journal article" date="2010" name="Hum. Mol. Genet.">
        <title>CHD8 interacts with CHD7, a protein which is mutated in CHARGE syndrome.</title>
        <authorList>
            <person name="Batsukh T."/>
            <person name="Pieper L."/>
            <person name="Koszucka A.M."/>
            <person name="von Velsen N."/>
            <person name="Hoyer-Fender S."/>
            <person name="Elbracht M."/>
            <person name="Bergman J.E."/>
            <person name="Hoefsloot L.H."/>
            <person name="Pauli S."/>
        </authorList>
    </citation>
    <scope>INTERACTION WITH CHD8</scope>
    <scope>SUBCELLULAR LOCATION</scope>
    <scope>CHARACTERIZATION OF VARIANTS CHARGES ARG-2091; ARG-2096 AND ARG-2108</scope>
    <scope>CHARACTERIZATION OF VARIANT ILE-2102</scope>
</reference>
<reference key="11">
    <citation type="journal article" date="2010" name="Sci. Signal.">
        <title>Quantitative phosphoproteomics reveals widespread full phosphorylation site occupancy during mitosis.</title>
        <authorList>
            <person name="Olsen J.V."/>
            <person name="Vermeulen M."/>
            <person name="Santamaria A."/>
            <person name="Kumar C."/>
            <person name="Miller M.L."/>
            <person name="Jensen L.J."/>
            <person name="Gnad F."/>
            <person name="Cox J."/>
            <person name="Jensen T.S."/>
            <person name="Nigg E.A."/>
            <person name="Brunak S."/>
            <person name="Mann M."/>
        </authorList>
    </citation>
    <scope>PHOSPHORYLATION [LARGE SCALE ANALYSIS] AT SER-1874; SER-2251; SER-2395; THR-2472; SER-2533; THR-2551; SER-2559; SER-2619; SER-2956 AND SER-2961</scope>
    <scope>IDENTIFICATION BY MASS SPECTROMETRY [LARGE SCALE ANALYSIS]</scope>
    <source>
        <tissue>Cervix carcinoma</tissue>
    </source>
</reference>
<reference key="12">
    <citation type="journal article" date="2011" name="BMC Syst. Biol.">
        <title>Initial characterization of the human central proteome.</title>
        <authorList>
            <person name="Burkard T.R."/>
            <person name="Planyavsky M."/>
            <person name="Kaupe I."/>
            <person name="Breitwieser F.P."/>
            <person name="Buerckstuemmer T."/>
            <person name="Bennett K.L."/>
            <person name="Superti-Furga G."/>
            <person name="Colinge J."/>
        </authorList>
    </citation>
    <scope>IDENTIFICATION BY MASS SPECTROMETRY [LARGE SCALE ANALYSIS]</scope>
</reference>
<reference key="13">
    <citation type="journal article" date="2011" name="Sci. Signal.">
        <title>System-wide temporal characterization of the proteome and phosphoproteome of human embryonic stem cell differentiation.</title>
        <authorList>
            <person name="Rigbolt K.T."/>
            <person name="Prokhorova T.A."/>
            <person name="Akimov V."/>
            <person name="Henningsen J."/>
            <person name="Johansen P.T."/>
            <person name="Kratchmarova I."/>
            <person name="Kassem M."/>
            <person name="Mann M."/>
            <person name="Olsen J.V."/>
            <person name="Blagoev B."/>
        </authorList>
    </citation>
    <scope>PHOSPHORYLATION [LARGE SCALE ANALYSIS] AT SER-637; SER-725; SER-1577; SER-1581; SER-1874; SER-2231; SER-2233; SER-2237; SER-2251; SER-2272; SER-2275; SER-2533; SER-2535; SER-2559; SER-2956 AND SER-2961</scope>
    <scope>IDENTIFICATION BY MASS SPECTROMETRY [LARGE SCALE ANALYSIS]</scope>
</reference>
<reference key="14">
    <citation type="journal article" date="2012" name="Genes Cells">
        <title>Identification of CHD7S as a novel splicing variant of CHD7 with functions similar and antagonistic to those of the full-length CHD7L.</title>
        <authorList>
            <person name="Kita Y."/>
            <person name="Nishiyama M."/>
            <person name="Nakayama K.I."/>
        </authorList>
    </citation>
    <scope>ALTERNATIVE SPLICING (ISOFORM 3)</scope>
    <scope>FUNCTION</scope>
    <scope>SUBCELLULAR LOCATION</scope>
    <scope>TISSUE SPECIFICITY</scope>
</reference>
<reference key="15">
    <citation type="journal article" date="2012" name="PLoS ONE">
        <title>Identification and characterization of FAM124B as a novel component of a CHD7 and CHD8 containing complex.</title>
        <authorList>
            <person name="Batsukh T."/>
            <person name="Schulz Y."/>
            <person name="Wolf S."/>
            <person name="Rabe T.I."/>
            <person name="Oellerich T."/>
            <person name="Urlaub H."/>
            <person name="Schaefer I.M."/>
            <person name="Pauli S."/>
        </authorList>
    </citation>
    <scope>INTERACTION WITH FAM124B</scope>
</reference>
<reference key="16">
    <citation type="journal article" date="2013" name="J. Proteome Res.">
        <title>Toward a comprehensive characterization of a human cancer cell phosphoproteome.</title>
        <authorList>
            <person name="Zhou H."/>
            <person name="Di Palma S."/>
            <person name="Preisinger C."/>
            <person name="Peng M."/>
            <person name="Polat A.N."/>
            <person name="Heck A.J."/>
            <person name="Mohammed S."/>
        </authorList>
    </citation>
    <scope>PHOSPHORYLATION [LARGE SCALE ANALYSIS] AT SER-2559 AND SER-2956</scope>
    <scope>IDENTIFICATION BY MASS SPECTROMETRY [LARGE SCALE ANALYSIS]</scope>
    <source>
        <tissue>Cervix carcinoma</tissue>
        <tissue>Erythroleukemia</tissue>
    </source>
</reference>
<reference key="17">
    <citation type="journal article" date="2014" name="Mol. Cell. Proteomics">
        <title>Immunoaffinity enrichment and mass spectrometry analysis of protein methylation.</title>
        <authorList>
            <person name="Guo A."/>
            <person name="Gu H."/>
            <person name="Zhou J."/>
            <person name="Mulhern D."/>
            <person name="Wang Y."/>
            <person name="Lee K.A."/>
            <person name="Yang V."/>
            <person name="Aguiar M."/>
            <person name="Kornhauser J."/>
            <person name="Jia X."/>
            <person name="Ren J."/>
            <person name="Beausoleil S.A."/>
            <person name="Silva J.C."/>
            <person name="Vemulapalli V."/>
            <person name="Bedford M.T."/>
            <person name="Comb M.J."/>
        </authorList>
    </citation>
    <scope>METHYLATION [LARGE SCALE ANALYSIS] AT ARG-148</scope>
    <scope>IDENTIFICATION BY MASS SPECTROMETRY [LARGE SCALE ANALYSIS]</scope>
    <source>
        <tissue>Colon carcinoma</tissue>
    </source>
</reference>
<reference key="18">
    <citation type="journal article" date="2017" name="J. Biol. Chem.">
        <title>The ATP-dependent Chromatin Remodeling Enzymes CHD6, CHD7, and CHD8 Exhibit Distinct Nucleosome Binding and Remodeling Activities.</title>
        <authorList>
            <person name="Manning B.J."/>
            <person name="Yusufzai T."/>
        </authorList>
    </citation>
    <scope>FUNCTION AS AN ATPASE</scope>
    <scope>CATALYTIC ACTIVITY</scope>
    <scope>BIOPHYSICOCHEMICAL PROPERTIES</scope>
    <scope>DNA-BINDING</scope>
</reference>
<reference key="19">
    <citation type="journal article" date="2022" name="J. Med. Genet.">
        <title>Functional analysis of TLK2 variants and their proximal interactomes implicates impaired kinase activity and chromatin maintenance defects in their pathogenesis.</title>
        <authorList>
            <person name="Pavinato L."/>
            <person name="Villamor-Paya M."/>
            <person name="Sanchiz-Calvo M."/>
            <person name="Andreoli C."/>
            <person name="Gay M."/>
            <person name="Vilaseca M."/>
            <person name="Arauz-Garofalo G."/>
            <person name="Ciolfi A."/>
            <person name="Bruselles A."/>
            <person name="Pippucci T."/>
            <person name="Prota V."/>
            <person name="Carli D."/>
            <person name="Giorgio E."/>
            <person name="Radio F.C."/>
            <person name="Antona V."/>
            <person name="Giuffre M."/>
            <person name="Ranguin K."/>
            <person name="Colson C."/>
            <person name="De Rubeis S."/>
            <person name="Dimartino P."/>
            <person name="Buxbaum J.D."/>
            <person name="Ferrero G.B."/>
            <person name="Tartaglia M."/>
            <person name="Martinelli S."/>
            <person name="Stracker T.H."/>
            <person name="Brusco A."/>
        </authorList>
    </citation>
    <scope>INTERACTION WITH TLK2</scope>
</reference>
<reference key="20">
    <citation type="journal article" date="2006" name="Am. J. Med. Genet. A">
        <title>CHD7 gene and non-syndromic cleft lip and palate.</title>
        <authorList>
            <person name="Felix T.M."/>
            <person name="Hanshaw B.C."/>
            <person name="Mueller R."/>
            <person name="Bitoun P."/>
            <person name="Murray J.C."/>
        </authorList>
    </citation>
    <scope>VARIANTS CHARGES PRO-1745; ILE-2102 AND CYS-2319</scope>
    <scope>VARIANTS LEU-466; VAL-511; VAL-522; ALA-527; LYS-2077 AND MET-2112</scope>
</reference>
<reference key="21">
    <citation type="journal article" date="2012" name="Hum. Mutat.">
        <title>Mutation update on the CHD7 gene involved in CHARGE syndrome.</title>
        <authorList>
            <person name="Janssen N."/>
            <person name="Bergman J.E."/>
            <person name="Swertz M.A."/>
            <person name="Tranebjaerg L."/>
            <person name="Lodahl M."/>
            <person name="Schoots J."/>
            <person name="Hofstra R.M."/>
            <person name="van Ravenswaaij-Arts C.M."/>
            <person name="Hoefsloot L.H."/>
        </authorList>
    </citation>
    <scope>VARIANTS CHARGES CYS-72; PRO-99; GLU-254; SER-439; GLY-699; CYS-840; ALA-942; ARG-975; SER-1020; VAL-1028; ARG-1031; SER-1081; ASN-1082; ARG-1101; ARG-1214; ARG-1251; PRO-1292; CYS-1317; ARG-1318; HIS-1345; ASP-1617; VAL-1619; SER-1684; VAL-1797; HIS-1812; GLY-1812; PRO-1815; PRO-2074; ARG-2091; GLY-2097; ILE-2102; ARG-2108; THR-2259; ALA-2286; THR-2312; ARG-2366 AND GLU-2464</scope>
    <scope>VARIANTS LEU-37; ALA-93; LEU-167; LEU-238; GLY-286; PRO-524; ALA-558; LYS-596; SER-744; ASN-812; HIS-944; SER-1594; VAL-1672; GLY-1866; GLY-1972; TRP-2062; MET-2112; ASP-2118; THR-2225; ALA-2330; SER-2415; ASP-2488; CYS-2491; GLN-2653; VAL-2725; LEU-2750; VAL-2780; THR-2789 AND ALA-2857</scope>
</reference>
<reference key="22">
    <citation type="journal article" date="2007" name="J. Mol. Biol.">
        <title>Solution structure of the BRK domains from CHD7.</title>
        <authorList>
            <person name="Allen M.D."/>
            <person name="Religa T.L."/>
            <person name="Freund S.M."/>
            <person name="Bycroft M."/>
        </authorList>
    </citation>
    <scope>STRUCTURE BY NMR OF 2561-2715</scope>
    <scope>INTERACTION WITH CTCF</scope>
</reference>
<reference key="23">
    <citation type="journal article" date="2004" name="Nat. Genet.">
        <title>Mutations in a new member of the chromodomain gene family cause CHARGE syndrome.</title>
        <authorList>
            <person name="Vissers L.E.L.M."/>
            <person name="van Ravenswaaij C.M.A."/>
            <person name="Admiraal R."/>
            <person name="Hurst J.A."/>
            <person name="de Vries B.B.A."/>
            <person name="Janssen I.M."/>
            <person name="van der Vliet W.A."/>
            <person name="Huys E.H.L.P.G."/>
            <person name="de Jong P.J."/>
            <person name="Hamel B.C.J."/>
            <person name="Schoenmakers E.F.P.M."/>
            <person name="Brunner H.G."/>
            <person name="Veltman J.A."/>
            <person name="Geurts van Kessel A."/>
        </authorList>
    </citation>
    <scope>VARIANTS CHARGES VAL-1028 AND ARG-1257</scope>
    <scope>TISSUE SPECIFICITY</scope>
</reference>
<reference key="24">
    <citation type="journal article" date="2006" name="Am. J. Hum. Genet.">
        <title>Spectrum of CHD7 mutations in 110 individuals with CHARGE syndrome and genotype-phenotype correlation.</title>
        <authorList>
            <person name="Lalani S.R."/>
            <person name="Safiullah A.M."/>
            <person name="Fernbach S.D."/>
            <person name="Harutyunyan K.G."/>
            <person name="Thaller C."/>
            <person name="Peterson L.E."/>
            <person name="McPherson J.D."/>
            <person name="Gibbs R.A."/>
            <person name="White L.D."/>
            <person name="Hefner M."/>
            <person name="Davenport S.L.H."/>
            <person name="Graham J.M."/>
            <person name="Bacino C.A."/>
            <person name="Glass N.L."/>
            <person name="Towbin J.A."/>
            <person name="Craigen W.J."/>
            <person name="Neish S.R."/>
            <person name="Lin A.E."/>
            <person name="Belmont J.W."/>
        </authorList>
    </citation>
    <scope>VARIANTS CHARGES GLY-1031; ARG-1214; PRO-1294; PRO-1815; ARG-2096 AND SER-2319</scope>
</reference>
<reference key="25">
    <citation type="journal article" date="2007" name="Am. J. Hum. Genet.">
        <title>CHD7 gene polymorphisms are associated with susceptibility to idiopathic scoliosis.</title>
        <authorList>
            <person name="Gao X."/>
            <person name="Gordon D."/>
            <person name="Zhang D."/>
            <person name="Browne R."/>
            <person name="Helms C."/>
            <person name="Gillum J."/>
            <person name="Weber S."/>
            <person name="Devroy S."/>
            <person name="Swaney S."/>
            <person name="Dobbs M."/>
            <person name="Morcuende J."/>
            <person name="Sheffield V."/>
            <person name="Lovett M."/>
            <person name="Bowcock A."/>
            <person name="Herring J."/>
            <person name="Wise C."/>
        </authorList>
    </citation>
    <scope>INVOLVEMENT IN SUSCEPTIBILITY TO IS3</scope>
</reference>
<reference key="26">
    <citation type="journal article" date="2008" name="Am. J. Hum. Genet.">
        <title>Mutations in CHD7, encoding a chromatin-remodeling protein, cause idiopathic hypogonadotropic hypogonadism and Kallmann syndrome.</title>
        <authorList>
            <person name="Kim H.-G."/>
            <person name="Kurth I."/>
            <person name="Lan F."/>
            <person name="Meliciani I."/>
            <person name="Wenzel W."/>
            <person name="Eom S.H."/>
            <person name="Kang G.B."/>
            <person name="Rosenberger G."/>
            <person name="Tekin M."/>
            <person name="Ozata M."/>
            <person name="Bick D.P."/>
            <person name="Sherins R.J."/>
            <person name="Walker S.L."/>
            <person name="Shi Y."/>
            <person name="Gusella J.F."/>
            <person name="Layman L.C."/>
        </authorList>
    </citation>
    <scope>VARIANTS HH5 ARG-55; PHE-834; LEU-2880 AND GLU-2948</scope>
    <scope>VARIANT THR-2789</scope>
</reference>
<reference key="27">
    <citation type="journal article" date="2008" name="Am. J. Med. Genet. A">
        <title>Familial CHARGE syndrome and the CHD7 gene: a recurrent missense mutation, intrafamilial recurrence and variability.</title>
        <authorList>
            <person name="Jongmans M.C."/>
            <person name="Hoefsloot L.H."/>
            <person name="van der Donk K.P."/>
            <person name="Admiraal R.J."/>
            <person name="Magee A."/>
            <person name="van de Laar I."/>
            <person name="Hendriks Y."/>
            <person name="Verheij J.B."/>
            <person name="Walpole I."/>
            <person name="Brunner H.G."/>
            <person name="van Ravenswaaij C.M."/>
        </authorList>
    </citation>
    <scope>VARIANT CHARGES ARG-2108</scope>
</reference>
<reference key="28">
    <citation type="journal article" date="2008" name="Clin. Genet.">
        <title>CHD7 mutation spectrum in 28 Swedish patients diagnosed with CHARGE syndrome.</title>
        <authorList>
            <person name="Wincent J."/>
            <person name="Holmberg E."/>
            <person name="Stromland K."/>
            <person name="Soller M."/>
            <person name="Mirzaei L."/>
            <person name="Djureinovic T."/>
            <person name="Robinson K."/>
            <person name="Anderlid B."/>
            <person name="Schoumans J."/>
        </authorList>
    </citation>
    <scope>VARIANTS THR-103 AND ASP-117</scope>
    <scope>VARIANTS CHARGES ARG-1214; PRO-1302; TRP-1592 AND ASP-1742</scope>
</reference>
<reference key="29">
    <citation type="journal article" date="2009" name="Clin. Genet.">
        <title>CHD7 mutations in patients initially diagnosed with Kallmann syndrome--the clinical overlap with CHARGE syndrome.</title>
        <authorList>
            <person name="Jongmans M.C."/>
            <person name="van Ravenswaaij-Arts C.M."/>
            <person name="Pitteloud N."/>
            <person name="Ogata T."/>
            <person name="Sato N."/>
            <person name="Claahsen-van der Grinten H.L."/>
            <person name="van der Donk K."/>
            <person name="Seminara S."/>
            <person name="Bergman J.E."/>
            <person name="Brunner H.G."/>
            <person name="Crowley W.F. Jr."/>
            <person name="Hoefsloot L.H."/>
        </authorList>
    </citation>
    <scope>VARIANT CHARGES ASN-2116</scope>
</reference>
<reference key="30">
    <citation type="journal article" date="2010" name="Genet. Test. Mol. Biomarkers">
        <title>Mutations in the CHD7 gene: the experience of a commercial laboratory.</title>
        <authorList>
            <person name="Bartels C.F."/>
            <person name="Scacheri C."/>
            <person name="White L."/>
            <person name="Scacheri P.C."/>
            <person name="Bale S."/>
        </authorList>
    </citation>
    <scope>VARIANTS CHARGES ILE-41; ARG-86; MET-238; ALA-558; THR-699; ASN-728; ASP-871; ALA-894; THR-907; MET-917; LYS-938; HIS-944; GLN-947; VAL-1028; GLN-1203; ASP-1208; PRO-1294; PRO-1322; CYS-1345; HIS-1395; ARG-1416; GLN-1457; CYS-1576; SER-1617; SER-1684; ARG-1739; GLU-1791; GLY-1866; THR-1950; HIS-2065; GLY-2084; ASP-2103; ASN-2116; CYS-2319; SER-2495; SER-2683; CYS-2702; THR-2733 AND MET-2931</scope>
    <scope>VARIANTS THR-103; ARG-201; VAL-340; ALA-369; LEU-466; VAL-522; VAL-636; SER-744; THR-2160; THR-2225; ALA-2330; LEU-2527; VAL-2806; ALA-2857 AND PHE-2984</scope>
</reference>
<reference key="31">
    <citation type="journal article" date="2011" name="PLoS ONE">
        <title>CHD7 mutational analysis and clinical considerations for auditory rehabilitation in deaf patients with CHARGE syndrome.</title>
        <authorList>
            <person name="Song M.H."/>
            <person name="Cho H.J."/>
            <person name="Lee H.K."/>
            <person name="Kwon T.J."/>
            <person name="Lee W.S."/>
            <person name="Oh S."/>
            <person name="Bok J."/>
            <person name="Choi J.Y."/>
            <person name="Kim U.K."/>
        </authorList>
    </citation>
    <scope>VARIANT CHARGES SER-2065</scope>
</reference>
<reference key="32">
    <citation type="journal article" date="2012" name="Clin. Genet.">
        <title>CHD7 mutations causing CHARGE syndrome are predominantly of paternal origin.</title>
        <authorList>
            <person name="Pauli S."/>
            <person name="von Velsen N."/>
            <person name="Burfeind P."/>
            <person name="Steckel M."/>
            <person name="Manz J."/>
            <person name="Buchholz A."/>
            <person name="Borozdin W."/>
            <person name="Kohlhase J."/>
        </authorList>
    </citation>
    <scope>VARIANTS CHARGES SER-1020 AND ASP-1802</scope>
</reference>
<reference key="33">
    <citation type="journal article" date="2013" name="Clin. Genet.">
        <title>Phenotype in 18 Danish subjects with genetically verified CHARGE syndrome.</title>
        <authorList>
            <person name="Husu E."/>
            <person name="Hove H."/>
            <person name="Farholt S."/>
            <person name="Bille M."/>
            <person name="Tranebjaerg L."/>
            <person name="Vogel I."/>
            <person name="Kreiborg S."/>
        </authorList>
    </citation>
    <scope>VARIANTS CHARGES SER-1684 AND GLY-2418</scope>
    <scope>VARIANT GLN-2653</scope>
</reference>
<reference key="34">
    <citation type="journal article" date="2014" name="J. Clin. Endocrinol. Metab.">
        <title>The prevalence of CHD7 missense versus truncating mutations is higher in patients with Kallmann syndrome than in typical CHARGE patients.</title>
        <authorList>
            <person name="Marcos S."/>
            <person name="Sarfati J."/>
            <person name="Leroy C."/>
            <person name="Fouveaut C."/>
            <person name="Parent P."/>
            <person name="Metz C."/>
            <person name="Wolczynski S."/>
            <person name="Gerard M."/>
            <person name="Bieth E."/>
            <person name="Kurtz F."/>
            <person name="Verier-Mine O."/>
            <person name="Perrin L."/>
            <person name="Archambeaud F."/>
            <person name="Cabrol S."/>
            <person name="Rodien P."/>
            <person name="Hove H."/>
            <person name="Prescott T."/>
            <person name="Lacombe D."/>
            <person name="Christin-Maitre S."/>
            <person name="Touraine P."/>
            <person name="Hieronimus S."/>
            <person name="Dewailly D."/>
            <person name="Young J."/>
            <person name="Pugeat M."/>
            <person name="Hardelin J.P."/>
            <person name="Dode C."/>
        </authorList>
    </citation>
    <scope>VARIANTS HH5 LYS-685 INS; HIS-758; TRP-886; SER-944; SER-1030; GLU-1291; CYS-1345; PHE-1375; SER-1684; VAL-1838; GLY-1912; CYS-2065; PRO-2074; ARG-2108; THR-2259; GLY-2398 AND PRO-2833</scope>
    <scope>VARIANTS SER-744; THR-2160 AND LEU-2527</scope>
</reference>
<reference key="35">
    <citation type="journal article" date="2015" name="Epilepsia">
        <title>Diagnostic yield of genetic testing in epileptic encephalopathy in childhood.</title>
        <authorList>
            <person name="Mercimek-Mahmutoglu S."/>
            <person name="Patel J."/>
            <person name="Cordeiro D."/>
            <person name="Hewson S."/>
            <person name="Callen D."/>
            <person name="Donner E.J."/>
            <person name="Hahn C.D."/>
            <person name="Kannu P."/>
            <person name="Kobayashi J."/>
            <person name="Minassian B.A."/>
            <person name="Moharir M."/>
            <person name="Siriwardena K."/>
            <person name="Weiss S.K."/>
            <person name="Weksberg R."/>
            <person name="Snead O.C. III"/>
        </authorList>
    </citation>
    <scope>VARIANT CHARGES TRP-2108</scope>
</reference>
<reference key="36">
    <citation type="journal article" date="2011" name="Int. J. Pediatr. Endocrinol.">
        <title>Unique phenotype in a patient with CHARGE syndrome.</title>
        <authorList>
            <person name="Jain S."/>
            <person name="Kim H.G."/>
            <person name="Lacbawan F."/>
            <person name="Meliciani I."/>
            <person name="Wenzel W."/>
            <person name="Kurth I."/>
            <person name="Sharma J."/>
            <person name="Schoeneman M."/>
            <person name="Ten S."/>
            <person name="Layman L.C."/>
            <person name="Jacobson-Dickman E."/>
        </authorList>
    </citation>
    <scope>VARIANT SER-744</scope>
</reference>
<accession>Q9P2D1</accession>
<accession>D0VBA5</accession>
<accession>E9PNZ2</accession>
<accession>Q05DI5</accession>
<accession>Q2TAN4</accession>
<accession>Q66K35</accession>
<accession>Q7Z6C0</accession>
<accession>Q7Z7Q2</accession>
<accession>Q9NXA0</accession>
<accession>Q9NXA3</accession>
<comment type="function">
    <text evidence="23 27">ATP-dependent chromatin-remodeling factor, slides nucleosomes along DNA; nucleosome sliding requires ATP (PubMed:28533432). Probable transcription regulator. May be involved in the in 45S precursor rRNA production.</text>
</comment>
<comment type="catalytic activity">
    <reaction evidence="27">
        <text>ATP + H2O = ADP + phosphate + H(+)</text>
        <dbReference type="Rhea" id="RHEA:13065"/>
        <dbReference type="ChEBI" id="CHEBI:15377"/>
        <dbReference type="ChEBI" id="CHEBI:15378"/>
        <dbReference type="ChEBI" id="CHEBI:30616"/>
        <dbReference type="ChEBI" id="CHEBI:43474"/>
        <dbReference type="ChEBI" id="CHEBI:456216"/>
    </reaction>
</comment>
<comment type="biophysicochemical properties">
    <kinetics>
        <KM evidence="27">6.4 nM for ATP</KM>
    </kinetics>
</comment>
<comment type="subunit">
    <text evidence="1 11 16 24 28">May interact with CTCF (PubMed:17603073). Interacts with CHD8 (PubMed:20453063). Interacts with FAM124B (PubMed:23285124). Found in a complex composed of AGO2, CHD7 and ARB2A (By similarity). Interacts with TLK2 (PubMed:33323470).</text>
</comment>
<comment type="interaction">
    <interactant intactId="EBI-3951683">
        <id>Q9P2D1</id>
    </interactant>
    <interactant intactId="EBI-4410319">
        <id>Q9HCK8-2</id>
        <label>CHD8</label>
    </interactant>
    <organismsDiffer>false</organismsDiffer>
    <experiments>3</experiments>
</comment>
<comment type="interaction">
    <interactant intactId="EBI-3951683">
        <id>Q9P2D1</id>
    </interactant>
    <interactant intactId="EBI-637807">
        <id>Q86U86</id>
        <label>PBRM1</label>
    </interactant>
    <organismsDiffer>false</organismsDiffer>
    <experiments>4</experiments>
</comment>
<comment type="interaction">
    <interactant intactId="EBI-3951683">
        <id>Q9P2D1</id>
    </interactant>
    <interactant intactId="EBI-357418">
        <id>Q8TAQ2</id>
        <label>SMARCC2</label>
    </interactant>
    <organismsDiffer>false</organismsDiffer>
    <experiments>4</experiments>
</comment>
<comment type="interaction">
    <interactant intactId="EBI-30872315">
        <id>Q9P2D1-1</id>
    </interactant>
    <interactant intactId="EBI-30872379">
        <id>Q9H5Z6-1</id>
        <label>FAM124B</label>
    </interactant>
    <organismsDiffer>false</organismsDiffer>
    <experiments>2</experiments>
</comment>
<comment type="subcellular location">
    <molecule>Isoform 1</molecule>
    <subcellularLocation>
        <location evidence="16">Nucleus</location>
    </subcellularLocation>
</comment>
<comment type="subcellular location">
    <molecule>Isoform 3</molecule>
    <subcellularLocation>
        <location evidence="23">Nucleus</location>
        <location evidence="23">Nucleolus</location>
    </subcellularLocation>
</comment>
<comment type="alternative products">
    <event type="alternative splicing"/>
    <isoform>
        <id>Q9P2D1-1</id>
        <name>1</name>
        <name>CHD7L</name>
        <sequence type="displayed"/>
    </isoform>
    <isoform>
        <id>Q9P2D1-2</id>
        <name>2</name>
        <sequence type="described" ref="VSP_026038 VSP_026039"/>
    </isoform>
    <isoform>
        <id>Q9P2D1-3</id>
        <name>3</name>
        <name>CHD7S</name>
        <sequence type="described" ref="VSP_046564 VSP_046565"/>
    </isoform>
    <isoform>
        <id>Q9P2D1-4</id>
        <name>4</name>
        <sequence type="described" ref="VSP_046563"/>
    </isoform>
</comment>
<comment type="tissue specificity">
    <text evidence="7 23">Widely expressed in fetal and adult tissues.</text>
</comment>
<comment type="disease" evidence="7 8 9 12 13 15 16 17 18 19 21 22 26">
    <disease id="DI-01338">
        <name>CHARGE syndrome</name>
        <acronym>CHARGES</acronym>
        <description>Common cause of congenital anomalies. Is characterized by a non-random pattern of congenital anomalies including choanal atresia and malformations of the heart, inner ear, and retina.</description>
        <dbReference type="MIM" id="214800"/>
    </disease>
    <text>The disease is caused by variants affecting the gene represented in this entry.</text>
</comment>
<comment type="disease" evidence="10">
    <disease id="DI-02881">
        <name>Idiopathic scoliosis 3</name>
        <acronym>IS3</acronym>
        <description>An abnormality of the vertebral column in which patients develop lateral curvature of the spine of at least 10 degrees.</description>
        <dbReference type="MIM" id="608765"/>
    </disease>
    <text>Disease susceptibility is associated with variants affecting the gene represented in this entry.</text>
</comment>
<comment type="disease" evidence="14 17 25">
    <disease id="DI-00621">
        <name>Hypogonadotropic hypogonadism 5 with or without anosmia</name>
        <acronym>HH5</acronym>
        <description>A disorder characterized by absent or incomplete sexual maturation by the age of 18 years, in conjunction with low levels of circulating gonadotropins and testosterone and no other abnormalities of the hypothalamic-pituitary axis. In some cases, it is associated with non-reproductive phenotypes, such as anosmia, cleft palate, and sensorineural hearing loss. Anosmia or hyposmia is related to the absence or hypoplasia of the olfactory bulbs and tracts. Hypogonadism is due to deficiency in gonadotropin-releasing hormone and probably results from a failure of embryonic migration of gonadotropin-releasing hormone-synthesizing neurons. In the presence of anosmia, idiopathic hypogonadotropic hypogonadism is referred to as Kallmann syndrome, whereas in the presence of a normal sense of smell, it has been termed normosmic idiopathic hypogonadotropic hypogonadism (nIHH).</description>
        <dbReference type="MIM" id="612370"/>
    </disease>
    <text>The disease is caused by variants affecting the gene represented in this entry.</text>
</comment>
<comment type="miscellaneous">
    <molecule>Isoform 2</molecule>
    <text evidence="31">May be due to an intron retention.</text>
</comment>
<comment type="miscellaneous">
    <molecule>Isoform 3</molecule>
    <text evidence="31">Ubiquitous, expression enriched in lung and large intestine.</text>
</comment>
<comment type="similarity">
    <text evidence="31">Belongs to the SNF2/RAD54 helicase family.</text>
</comment>
<comment type="sequence caution" evidence="31">
    <conflict type="erroneous initiation">
        <sequence resource="EMBL-CDS" id="AAH14681"/>
    </conflict>
    <text>Truncated N-terminus.</text>
</comment>
<comment type="sequence caution" evidence="31">
    <conflict type="miscellaneous discrepancy">
        <sequence resource="EMBL-CDS" id="AAH14681"/>
    </conflict>
    <text>Potential poly-A sequence.</text>
</comment>
<comment type="sequence caution" evidence="31">
    <conflict type="erroneous initiation">
        <sequence resource="EMBL-CDS" id="AAH53890"/>
    </conflict>
    <text>Truncated N-terminus.</text>
</comment>
<comment type="sequence caution" evidence="31">
    <conflict type="erroneous initiation">
        <sequence resource="EMBL-CDS" id="AAH68000"/>
    </conflict>
    <text>Truncated N-terminus.</text>
</comment>
<comment type="sequence caution" evidence="31">
    <conflict type="erroneous initiation">
        <sequence resource="EMBL-CDS" id="AAH80627"/>
    </conflict>
    <text>Extended N-terminus.</text>
</comment>
<comment type="sequence caution" evidence="31">
    <conflict type="miscellaneous discrepancy">
        <sequence resource="EMBL-CDS" id="AAH80627"/>
    </conflict>
    <text>Potential poly-A sequence.</text>
</comment>
<comment type="sequence caution" evidence="31">
    <conflict type="miscellaneous discrepancy">
        <sequence resource="EMBL-CDS" id="AAI10819"/>
    </conflict>
    <text>Potential poly-A sequence.</text>
</comment>
<comment type="sequence caution" evidence="31">
    <conflict type="erroneous initiation">
        <sequence resource="EMBL-CDS" id="BAA91113"/>
    </conflict>
    <text>Truncated N-terminus.</text>
</comment>
<comment type="sequence caution" evidence="31">
    <conflict type="erroneous initiation">
        <sequence resource="EMBL-CDS" id="BAA91116"/>
    </conflict>
    <text>Truncated N-terminus.</text>
</comment>
<comment type="online information" name="CHD7 database">
    <link uri="https://www.chd7.org/"/>
</comment>
<proteinExistence type="evidence at protein level"/>
<evidence type="ECO:0000250" key="1">
    <source>
        <dbReference type="UniProtKB" id="A2AJK6"/>
    </source>
</evidence>
<evidence type="ECO:0000255" key="2"/>
<evidence type="ECO:0000255" key="3">
    <source>
        <dbReference type="PROSITE-ProRule" id="PRU00053"/>
    </source>
</evidence>
<evidence type="ECO:0000255" key="4">
    <source>
        <dbReference type="PROSITE-ProRule" id="PRU00541"/>
    </source>
</evidence>
<evidence type="ECO:0000255" key="5">
    <source>
        <dbReference type="PROSITE-ProRule" id="PRU00542"/>
    </source>
</evidence>
<evidence type="ECO:0000256" key="6">
    <source>
        <dbReference type="SAM" id="MobiDB-lite"/>
    </source>
</evidence>
<evidence type="ECO:0000269" key="7">
    <source>
    </source>
</evidence>
<evidence type="ECO:0000269" key="8">
    <source>
    </source>
</evidence>
<evidence type="ECO:0000269" key="9">
    <source>
    </source>
</evidence>
<evidence type="ECO:0000269" key="10">
    <source>
    </source>
</evidence>
<evidence type="ECO:0000269" key="11">
    <source>
    </source>
</evidence>
<evidence type="ECO:0000269" key="12">
    <source>
    </source>
</evidence>
<evidence type="ECO:0000269" key="13">
    <source>
    </source>
</evidence>
<evidence type="ECO:0000269" key="14">
    <source>
    </source>
</evidence>
<evidence type="ECO:0000269" key="15">
    <source>
    </source>
</evidence>
<evidence type="ECO:0000269" key="16">
    <source>
    </source>
</evidence>
<evidence type="ECO:0000269" key="17">
    <source>
    </source>
</evidence>
<evidence type="ECO:0000269" key="18">
    <source>
    </source>
</evidence>
<evidence type="ECO:0000269" key="19">
    <source>
    </source>
</evidence>
<evidence type="ECO:0000269" key="20">
    <source>
    </source>
</evidence>
<evidence type="ECO:0000269" key="21">
    <source>
    </source>
</evidence>
<evidence type="ECO:0000269" key="22">
    <source>
    </source>
</evidence>
<evidence type="ECO:0000269" key="23">
    <source>
    </source>
</evidence>
<evidence type="ECO:0000269" key="24">
    <source>
    </source>
</evidence>
<evidence type="ECO:0000269" key="25">
    <source>
    </source>
</evidence>
<evidence type="ECO:0000269" key="26">
    <source>
    </source>
</evidence>
<evidence type="ECO:0000269" key="27">
    <source>
    </source>
</evidence>
<evidence type="ECO:0000269" key="28">
    <source>
    </source>
</evidence>
<evidence type="ECO:0000303" key="29">
    <source>
    </source>
</evidence>
<evidence type="ECO:0000303" key="30">
    <source ref="1"/>
</evidence>
<evidence type="ECO:0000305" key="31"/>
<evidence type="ECO:0007744" key="32">
    <source>
    </source>
</evidence>
<evidence type="ECO:0007744" key="33">
    <source>
    </source>
</evidence>
<evidence type="ECO:0007744" key="34">
    <source>
    </source>
</evidence>
<evidence type="ECO:0007744" key="35">
    <source>
    </source>
</evidence>
<evidence type="ECO:0007744" key="36">
    <source>
    </source>
</evidence>
<evidence type="ECO:0007744" key="37">
    <source>
    </source>
</evidence>
<evidence type="ECO:0007829" key="38">
    <source>
        <dbReference type="PDB" id="2CKC"/>
    </source>
</evidence>
<evidence type="ECO:0007829" key="39">
    <source>
        <dbReference type="PDB" id="2V0E"/>
    </source>
</evidence>
<evidence type="ECO:0007829" key="40">
    <source>
        <dbReference type="PDB" id="2V0F"/>
    </source>
</evidence>
<feature type="chain" id="PRO_0000080232" description="Chromodomain-helicase-DNA-binding protein 7">
    <location>
        <begin position="1"/>
        <end position="2997"/>
    </location>
</feature>
<feature type="domain" description="Chromo 1" evidence="3">
    <location>
        <begin position="800"/>
        <end position="867"/>
    </location>
</feature>
<feature type="domain" description="Chromo 2" evidence="3">
    <location>
        <begin position="882"/>
        <end position="947"/>
    </location>
</feature>
<feature type="domain" description="Helicase ATP-binding" evidence="4">
    <location>
        <begin position="980"/>
        <end position="1154"/>
    </location>
</feature>
<feature type="domain" description="Helicase C-terminal" evidence="5">
    <location>
        <begin position="1294"/>
        <end position="1464"/>
    </location>
</feature>
<feature type="region of interest" description="Disordered" evidence="6">
    <location>
        <begin position="86"/>
        <end position="144"/>
    </location>
</feature>
<feature type="region of interest" description="Disordered" evidence="6">
    <location>
        <begin position="160"/>
        <end position="186"/>
    </location>
</feature>
<feature type="region of interest" description="Disordered" evidence="6">
    <location>
        <begin position="199"/>
        <end position="287"/>
    </location>
</feature>
<feature type="region of interest" description="Disordered" evidence="6">
    <location>
        <begin position="375"/>
        <end position="419"/>
    </location>
</feature>
<feature type="region of interest" description="Disordered" evidence="6">
    <location>
        <begin position="498"/>
        <end position="816"/>
    </location>
</feature>
<feature type="region of interest" description="Disordered" evidence="6">
    <location>
        <begin position="938"/>
        <end position="959"/>
    </location>
</feature>
<feature type="region of interest" description="Disordered" evidence="6">
    <location>
        <begin position="1576"/>
        <end position="1600"/>
    </location>
</feature>
<feature type="region of interest" description="Disordered" evidence="6">
    <location>
        <begin position="1837"/>
        <end position="1863"/>
    </location>
</feature>
<feature type="region of interest" description="Disordered" evidence="6">
    <location>
        <begin position="2170"/>
        <end position="2290"/>
    </location>
</feature>
<feature type="region of interest" description="Disordered" evidence="6">
    <location>
        <begin position="2823"/>
        <end position="2872"/>
    </location>
</feature>
<feature type="region of interest" description="Disordered" evidence="6">
    <location>
        <begin position="2935"/>
        <end position="2997"/>
    </location>
</feature>
<feature type="coiled-coil region" evidence="2">
    <location>
        <begin position="2401"/>
        <end position="2431"/>
    </location>
</feature>
<feature type="short sequence motif" description="DEAH box">
    <location>
        <begin position="1105"/>
        <end position="1108"/>
    </location>
</feature>
<feature type="compositionally biased region" description="Polar residues" evidence="6">
    <location>
        <begin position="88"/>
        <end position="106"/>
    </location>
</feature>
<feature type="compositionally biased region" description="Pro residues" evidence="6">
    <location>
        <begin position="166"/>
        <end position="177"/>
    </location>
</feature>
<feature type="compositionally biased region" description="Polar residues" evidence="6">
    <location>
        <begin position="199"/>
        <end position="224"/>
    </location>
</feature>
<feature type="compositionally biased region" description="Polar residues" evidence="6">
    <location>
        <begin position="238"/>
        <end position="255"/>
    </location>
</feature>
<feature type="compositionally biased region" description="Polar residues" evidence="6">
    <location>
        <begin position="375"/>
        <end position="390"/>
    </location>
</feature>
<feature type="compositionally biased region" description="Low complexity" evidence="6">
    <location>
        <begin position="498"/>
        <end position="510"/>
    </location>
</feature>
<feature type="compositionally biased region" description="Basic and acidic residues" evidence="6">
    <location>
        <begin position="607"/>
        <end position="620"/>
    </location>
</feature>
<feature type="compositionally biased region" description="Polar residues" evidence="6">
    <location>
        <begin position="627"/>
        <end position="636"/>
    </location>
</feature>
<feature type="compositionally biased region" description="Basic and acidic residues" evidence="6">
    <location>
        <begin position="650"/>
        <end position="682"/>
    </location>
</feature>
<feature type="compositionally biased region" description="Basic and acidic residues" evidence="6">
    <location>
        <begin position="717"/>
        <end position="729"/>
    </location>
</feature>
<feature type="compositionally biased region" description="Basic residues" evidence="6">
    <location>
        <begin position="746"/>
        <end position="758"/>
    </location>
</feature>
<feature type="compositionally biased region" description="Basic and acidic residues" evidence="6">
    <location>
        <begin position="759"/>
        <end position="769"/>
    </location>
</feature>
<feature type="compositionally biased region" description="Polar residues" evidence="6">
    <location>
        <begin position="782"/>
        <end position="794"/>
    </location>
</feature>
<feature type="compositionally biased region" description="Basic and acidic residues" evidence="6">
    <location>
        <begin position="1584"/>
        <end position="1596"/>
    </location>
</feature>
<feature type="compositionally biased region" description="Acidic residues" evidence="6">
    <location>
        <begin position="1844"/>
        <end position="1855"/>
    </location>
</feature>
<feature type="compositionally biased region" description="Basic and acidic residues" evidence="6">
    <location>
        <begin position="2170"/>
        <end position="2189"/>
    </location>
</feature>
<feature type="compositionally biased region" description="Basic and acidic residues" evidence="6">
    <location>
        <begin position="2198"/>
        <end position="2207"/>
    </location>
</feature>
<feature type="compositionally biased region" description="Acidic residues" evidence="6">
    <location>
        <begin position="2237"/>
        <end position="2251"/>
    </location>
</feature>
<feature type="compositionally biased region" description="Low complexity" evidence="6">
    <location>
        <begin position="2823"/>
        <end position="2832"/>
    </location>
</feature>
<feature type="compositionally biased region" description="Basic and acidic residues" evidence="6">
    <location>
        <begin position="2839"/>
        <end position="2849"/>
    </location>
</feature>
<feature type="compositionally biased region" description="Basic and acidic residues" evidence="6">
    <location>
        <begin position="2935"/>
        <end position="2951"/>
    </location>
</feature>
<feature type="compositionally biased region" description="Acidic residues" evidence="6">
    <location>
        <begin position="2970"/>
        <end position="2997"/>
    </location>
</feature>
<feature type="binding site" evidence="4">
    <location>
        <begin position="993"/>
        <end position="1000"/>
    </location>
    <ligand>
        <name>ATP</name>
        <dbReference type="ChEBI" id="CHEBI:30616"/>
    </ligand>
</feature>
<feature type="modified residue" description="Omega-N-methylarginine" evidence="37">
    <location>
        <position position="148"/>
    </location>
</feature>
<feature type="modified residue" description="Asymmetric dimethylarginine" evidence="1">
    <location>
        <position position="286"/>
    </location>
</feature>
<feature type="modified residue" description="Phosphoserine" evidence="35">
    <location>
        <position position="637"/>
    </location>
</feature>
<feature type="modified residue" description="Phosphoserine" evidence="35">
    <location>
        <position position="725"/>
    </location>
</feature>
<feature type="modified residue" description="Phosphoserine" evidence="35">
    <location>
        <position position="1577"/>
    </location>
</feature>
<feature type="modified residue" description="Phosphoserine" evidence="35">
    <location>
        <position position="1581"/>
    </location>
</feature>
<feature type="modified residue" description="Phosphoserine" evidence="34 35">
    <location>
        <position position="1874"/>
    </location>
</feature>
<feature type="modified residue" description="Phosphoserine" evidence="35">
    <location>
        <position position="2231"/>
    </location>
</feature>
<feature type="modified residue" description="Phosphoserine" evidence="35">
    <location>
        <position position="2233"/>
    </location>
</feature>
<feature type="modified residue" description="Phosphoserine" evidence="35">
    <location>
        <position position="2237"/>
    </location>
</feature>
<feature type="modified residue" description="Phosphoserine" evidence="34 35">
    <location>
        <position position="2251"/>
    </location>
</feature>
<feature type="modified residue" description="Phosphoserine" evidence="35">
    <location>
        <position position="2272"/>
    </location>
</feature>
<feature type="modified residue" description="Phosphoserine" evidence="35">
    <location>
        <position position="2275"/>
    </location>
</feature>
<feature type="modified residue" description="Phosphoserine" evidence="32">
    <location>
        <position position="2356"/>
    </location>
</feature>
<feature type="modified residue" description="Phosphoserine" evidence="34">
    <location>
        <position position="2395"/>
    </location>
</feature>
<feature type="modified residue" description="Phosphothreonine" evidence="34">
    <location>
        <position position="2472"/>
    </location>
</feature>
<feature type="modified residue" description="Phosphoserine" evidence="32 34 35">
    <location>
        <position position="2533"/>
    </location>
</feature>
<feature type="modified residue" description="Phosphoserine" evidence="35">
    <location>
        <position position="2535"/>
    </location>
</feature>
<feature type="modified residue" description="Phosphothreonine" evidence="32 34">
    <location>
        <position position="2551"/>
    </location>
</feature>
<feature type="modified residue" description="Phosphoserine" evidence="32 33 34 35 36">
    <location>
        <position position="2559"/>
    </location>
</feature>
<feature type="modified residue" description="Phosphoserine" evidence="34">
    <location>
        <position position="2619"/>
    </location>
</feature>
<feature type="modified residue" description="Phosphoserine" evidence="34 35 36">
    <location>
        <position position="2956"/>
    </location>
</feature>
<feature type="modified residue" description="Phosphoserine" evidence="34 35">
    <location>
        <position position="2961"/>
    </location>
</feature>
<feature type="splice variant" id="VSP_046563" description="In isoform 4." evidence="30">
    <location>
        <begin position="572"/>
        <end position="2620"/>
    </location>
</feature>
<feature type="splice variant" id="VSP_046564" description="In isoform 3." evidence="31">
    <original>F</original>
    <variation>L</variation>
    <location>
        <position position="833"/>
    </location>
</feature>
<feature type="splice variant" id="VSP_046565" description="In isoform 3." evidence="31">
    <location>
        <begin position="834"/>
        <end position="2620"/>
    </location>
</feature>
<feature type="splice variant" id="VSP_026038" description="In isoform 2." evidence="29">
    <original>EHKVLLTGTPLQ</original>
    <variation>VSDHIGDCTEPE</variation>
    <location>
        <begin position="1127"/>
        <end position="1138"/>
    </location>
</feature>
<feature type="splice variant" id="VSP_026039" description="In isoform 2." evidence="29">
    <location>
        <begin position="1139"/>
        <end position="2997"/>
    </location>
</feature>
<feature type="sequence variant" id="VAR_068374" description="In dbSNP:rs1416709395." evidence="21">
    <original>M</original>
    <variation>L</variation>
    <location>
        <position position="37"/>
    </location>
</feature>
<feature type="sequence variant" id="VAR_068104" description="In CHARGES; uncertain significance; dbSNP:rs756851968." evidence="17">
    <original>M</original>
    <variation>I</variation>
    <location>
        <position position="41"/>
    </location>
</feature>
<feature type="sequence variant" id="VAR_054623" description="In HH5; phenotype consistent with Kallmann syndrome; dbSNP:rs121434345." evidence="14">
    <original>H</original>
    <variation>R</variation>
    <location>
        <position position="55"/>
    </location>
</feature>
<feature type="sequence variant" id="VAR_068375" description="In CHARGES; uncertain significance; dbSNP:rs767819417." evidence="21">
    <original>Y</original>
    <variation>C</variation>
    <location>
        <position position="72"/>
    </location>
</feature>
<feature type="sequence variant" id="VAR_068105" description="In CHARGES; uncertain significance; dbSNP:rs1355349547." evidence="17">
    <original>P</original>
    <variation>R</variation>
    <location>
        <position position="86"/>
    </location>
</feature>
<feature type="sequence variant" id="VAR_068376" description="In dbSNP:rs398124317." evidence="21">
    <original>T</original>
    <variation>A</variation>
    <location>
        <position position="93"/>
    </location>
</feature>
<feature type="sequence variant" id="VAR_068377" description="In CHARGES; uncertain significance; dbSNP:rs779024959." evidence="21">
    <original>A</original>
    <variation>P</variation>
    <location>
        <position position="99"/>
    </location>
</feature>
<feature type="sequence variant" id="VAR_068106" description="In dbSNP:rs41272435." evidence="13 17">
    <original>S</original>
    <variation>T</variation>
    <location>
        <position position="103"/>
    </location>
</feature>
<feature type="sequence variant" id="VAR_072954" description="In dbSNP:rs372110761." evidence="13">
    <original>G</original>
    <variation>D</variation>
    <location>
        <position position="117"/>
    </location>
</feature>
<feature type="sequence variant" id="VAR_068378" description="In dbSNP:rs61742851." evidence="21">
    <original>P</original>
    <variation>L</variation>
    <location>
        <position position="167"/>
    </location>
</feature>
<feature type="sequence variant" id="VAR_068107" description="In dbSNP:rs764496155." evidence="17">
    <original>Q</original>
    <variation>R</variation>
    <location>
        <position position="201"/>
    </location>
</feature>
<feature type="sequence variant" id="VAR_068379" description="In dbSNP:rs200898742." evidence="21">
    <original>V</original>
    <variation>L</variation>
    <location>
        <position position="238"/>
    </location>
</feature>
<feature type="sequence variant" id="VAR_068108" description="In CHARGES; uncertain significance; dbSNP:rs200898742." evidence="17">
    <original>V</original>
    <variation>M</variation>
    <location>
        <position position="238"/>
    </location>
</feature>
<feature type="sequence variant" id="VAR_068380" description="In CHARGES; uncertain significance; dbSNP:rs1554581354." evidence="21">
    <original>Q</original>
    <variation>E</variation>
    <location>
        <position position="254"/>
    </location>
</feature>
<feature type="sequence variant" id="VAR_068381" description="In dbSNP:rs61995713." evidence="21">
    <original>R</original>
    <variation>G</variation>
    <location>
        <position position="286"/>
    </location>
</feature>
<feature type="sequence variant" id="VAR_048731" description="In dbSNP:rs41305525." evidence="17">
    <original>M</original>
    <variation>V</variation>
    <location>
        <position position="340"/>
    </location>
</feature>
<feature type="sequence variant" id="VAR_068109" description="In dbSNP:rs766747354." evidence="17">
    <original>P</original>
    <variation>A</variation>
    <location>
        <position position="369"/>
    </location>
</feature>
<feature type="sequence variant" id="VAR_068382" description="In CHARGES; uncertain significance; dbSNP:rs772369092." evidence="21">
    <original>P</original>
    <variation>S</variation>
    <location>
        <position position="439"/>
    </location>
</feature>
<feature type="sequence variant" id="VAR_068110" description="In dbSNP:rs71640285." evidence="9 17">
    <original>S</original>
    <variation>L</variation>
    <location>
        <position position="466"/>
    </location>
</feature>
<feature type="sequence variant" id="VAR_069032" evidence="9">
    <original>L</original>
    <variation>V</variation>
    <location>
        <position position="511"/>
    </location>
</feature>
<feature type="sequence variant" id="VAR_068111" description="In dbSNP:rs142962579." evidence="9 17">
    <original>G</original>
    <variation>V</variation>
    <location>
        <position position="522"/>
    </location>
</feature>
<feature type="sequence variant" id="VAR_068383" description="In dbSNP:rs78962949." evidence="21">
    <original>H</original>
    <variation>P</variation>
    <location>
        <position position="524"/>
    </location>
</feature>
<feature type="sequence variant" id="VAR_069033" evidence="9">
    <original>S</original>
    <variation>A</variation>
    <location>
        <position position="527"/>
    </location>
</feature>
<feature type="sequence variant" id="VAR_068112" description="In CHARGES; uncertain significance; dbSNP:rs746837682." evidence="17 21">
    <original>P</original>
    <variation>A</variation>
    <location>
        <position position="558"/>
    </location>
</feature>
<feature type="sequence variant" id="VAR_068384" evidence="21">
    <original>Q</original>
    <variation>K</variation>
    <location>
        <position position="596"/>
    </location>
</feature>
<feature type="sequence variant" id="VAR_068113" description="In dbSNP:rs529321177." evidence="17">
    <original>G</original>
    <variation>V</variation>
    <location>
        <position position="636"/>
    </location>
</feature>
<feature type="sequence variant" id="VAR_072955" description="In HH5." evidence="25">
    <original>A</original>
    <variation>AK</variation>
    <location>
        <position position="685"/>
    </location>
</feature>
<feature type="sequence variant" id="VAR_068385" description="In CHARGES; uncertain significance." evidence="21">
    <original>S</original>
    <variation>G</variation>
    <location>
        <position position="699"/>
    </location>
</feature>
<feature type="sequence variant" id="VAR_068114" description="In CHARGES; uncertain significance." evidence="17">
    <original>S</original>
    <variation>T</variation>
    <location>
        <position position="699"/>
    </location>
</feature>
<feature type="sequence variant" id="VAR_068115" description="In CHARGES; uncertain significance; dbSNP:rs756365280." evidence="17">
    <original>D</original>
    <variation>N</variation>
    <location>
        <position position="728"/>
    </location>
</feature>
<feature type="sequence variant" id="VAR_068116" description="In dbSNP:rs141947938." evidence="17 20 21 25">
    <original>G</original>
    <variation>S</variation>
    <location>
        <position position="744"/>
    </location>
</feature>
<feature type="sequence variant" id="VAR_072956" description="In HH5; dbSNP:rs202208393." evidence="25">
    <original>R</original>
    <variation>H</variation>
    <location>
        <position position="758"/>
    </location>
</feature>
<feature type="sequence variant" id="VAR_068386" description="In dbSNP:rs61978638." evidence="21">
    <original>K</original>
    <variation>N</variation>
    <location>
        <position position="812"/>
    </location>
</feature>
<feature type="sequence variant" id="VAR_054624" description="In HH5; phenotype consistent with normosmic idiopathic hypogonadotropic hypogonadism; dbSNP:rs121434344." evidence="14">
    <original>S</original>
    <variation>F</variation>
    <location>
        <position position="834"/>
    </location>
</feature>
<feature type="sequence variant" id="VAR_068387" description="In CHARGES." evidence="21">
    <original>W</original>
    <variation>C</variation>
    <location>
        <position position="840"/>
    </location>
</feature>
<feature type="sequence variant" id="VAR_068117" description="In CHARGES; dbSNP:rs2150739129." evidence="17">
    <original>E</original>
    <variation>D</variation>
    <location>
        <position position="871"/>
    </location>
</feature>
<feature type="sequence variant" id="VAR_072957" description="In HH5; dbSNP:rs772260091." evidence="25">
    <original>R</original>
    <variation>W</variation>
    <location>
        <position position="886"/>
    </location>
</feature>
<feature type="sequence variant" id="VAR_068118" description="In CHARGES; uncertain significance; dbSNP:rs377662366." evidence="17">
    <original>T</original>
    <variation>A</variation>
    <location>
        <position position="894"/>
    </location>
</feature>
<feature type="sequence variant" id="VAR_068119" description="In CHARGES; uncertain significance." evidence="17">
    <original>K</original>
    <variation>T</variation>
    <location>
        <position position="907"/>
    </location>
</feature>
<feature type="sequence variant" id="VAR_068120" description="In CHARGES; uncertain significance; dbSNP:rs1165711448." evidence="17">
    <original>T</original>
    <variation>M</variation>
    <location>
        <position position="917"/>
    </location>
</feature>
<feature type="sequence variant" id="VAR_068121" description="In CHARGES; uncertain significance; dbSNP:rs763978472." evidence="17">
    <original>R</original>
    <variation>K</variation>
    <location>
        <position position="938"/>
    </location>
</feature>
<feature type="sequence variant" id="VAR_068388" description="In CHARGES; uncertain significance; dbSNP:rs370194460." evidence="21">
    <original>T</original>
    <variation>A</variation>
    <location>
        <position position="942"/>
    </location>
</feature>
<feature type="sequence variant" id="VAR_068122" description="In CHARGES; uncertain significance; dbSNP:rs117506164." evidence="17 21">
    <original>R</original>
    <variation>H</variation>
    <location>
        <position position="944"/>
    </location>
</feature>
<feature type="sequence variant" id="VAR_072958" description="In HH5; dbSNP:rs587783435." evidence="25">
    <original>R</original>
    <variation>S</variation>
    <location>
        <position position="944"/>
    </location>
</feature>
<feature type="sequence variant" id="VAR_068123" description="In CHARGES; uncertain significance; dbSNP:rs768481542." evidence="17">
    <original>R</original>
    <variation>Q</variation>
    <location>
        <position position="947"/>
    </location>
</feature>
<feature type="sequence variant" id="VAR_068389" description="In CHARGES; uncertain significance." evidence="21">
    <original>G</original>
    <variation>R</variation>
    <location>
        <position position="975"/>
    </location>
</feature>
<feature type="sequence variant" id="VAR_068124" description="In CHARGES; dbSNP:rs1057521077." evidence="18 21">
    <original>L</original>
    <variation>S</variation>
    <location>
        <position position="1020"/>
    </location>
</feature>
<feature type="sequence variant" id="VAR_021059" description="In CHARGES; dbSNP:rs121434338." evidence="7 17 21">
    <original>I</original>
    <variation>V</variation>
    <location>
        <position position="1028"/>
    </location>
</feature>
<feature type="sequence variant" id="VAR_072959" description="In HH5; dbSNP:rs886041167." evidence="25">
    <original>N</original>
    <variation>S</variation>
    <location>
        <position position="1030"/>
    </location>
</feature>
<feature type="sequence variant" id="VAR_033245" description="In CHARGES; dbSNP:rs1804098617." evidence="8">
    <original>W</original>
    <variation>G</variation>
    <location>
        <position position="1031"/>
    </location>
</feature>
<feature type="sequence variant" id="VAR_068390" description="In CHARGES." evidence="21">
    <original>W</original>
    <variation>R</variation>
    <location>
        <position position="1031"/>
    </location>
</feature>
<feature type="sequence variant" id="VAR_068391" description="In CHARGES; uncertain significance." evidence="21">
    <original>I</original>
    <variation>S</variation>
    <location>
        <position position="1081"/>
    </location>
</feature>
<feature type="sequence variant" id="VAR_068392" description="In CHARGES." evidence="21">
    <original>T</original>
    <variation>N</variation>
    <location>
        <position position="1082"/>
    </location>
</feature>
<feature type="sequence variant" id="VAR_068393" description="In CHARGES; dbSNP:rs1586393556." evidence="21">
    <original>C</original>
    <variation>R</variation>
    <location>
        <position position="1101"/>
    </location>
</feature>
<feature type="sequence variant" id="VAR_068125" description="In CHARGES; uncertain significance." evidence="17">
    <original>E</original>
    <variation>Q</variation>
    <location>
        <position position="1203"/>
    </location>
</feature>
<feature type="sequence variant" id="VAR_068126" description="In CHARGES; uncertain significance; dbSNP:rs886040988." evidence="17">
    <original>V</original>
    <variation>D</variation>
    <location>
        <position position="1208"/>
    </location>
</feature>
<feature type="sequence variant" id="VAR_033246" description="In CHARGES." evidence="8 13 21">
    <original>Q</original>
    <variation>R</variation>
    <location>
        <position position="1214"/>
    </location>
</feature>
<feature type="sequence variant" id="VAR_068394" description="In CHARGES; uncertain significance." evidence="21">
    <original>C</original>
    <variation>R</variation>
    <location>
        <position position="1251"/>
    </location>
</feature>
<feature type="sequence variant" id="VAR_021060" description="In CHARGES; dbSNP:rs121434339." evidence="7">
    <original>L</original>
    <variation>R</variation>
    <location>
        <position position="1257"/>
    </location>
</feature>
<feature type="sequence variant" id="VAR_072960" description="In HH5." evidence="25">
    <original>K</original>
    <variation>E</variation>
    <location>
        <position position="1291"/>
    </location>
</feature>
<feature type="sequence variant" id="VAR_068395" description="In CHARGES." evidence="21">
    <original>L</original>
    <variation>P</variation>
    <location>
        <position position="1292"/>
    </location>
</feature>
<feature type="sequence variant" id="VAR_033247" description="In CHARGES; dbSNP:rs864309609." evidence="8 17">
    <original>L</original>
    <variation>P</variation>
    <location>
        <position position="1294"/>
    </location>
</feature>
<feature type="sequence variant" id="VAR_072961" description="In CHARGES; dbSNP:rs1563643394." evidence="13">
    <original>L</original>
    <variation>P</variation>
    <location>
        <position position="1302"/>
    </location>
</feature>
<feature type="sequence variant" id="VAR_068396" description="In CHARGES; uncertain significance; dbSNP:rs373301291." evidence="21">
    <original>R</original>
    <variation>C</variation>
    <location>
        <position position="1317"/>
    </location>
</feature>
<feature type="sequence variant" id="VAR_068397" description="In CHARGES." evidence="21">
    <original>C</original>
    <variation>R</variation>
    <location>
        <position position="1318"/>
    </location>
</feature>
<feature type="sequence variant" id="VAR_068127" description="In CHARGES; uncertain significance." evidence="17">
    <original>L</original>
    <variation>P</variation>
    <location>
        <position position="1322"/>
    </location>
</feature>
<feature type="sequence variant" id="VAR_068128" description="In CHARGES and HH5; uncertain significance; dbSNP:rs1563644113." evidence="17 25">
    <original>R</original>
    <variation>C</variation>
    <location>
        <position position="1345"/>
    </location>
</feature>
<feature type="sequence variant" id="VAR_068398" description="In CHARGES; dbSNP:rs1804766911." evidence="21">
    <original>R</original>
    <variation>H</variation>
    <location>
        <position position="1345"/>
    </location>
</feature>
<feature type="sequence variant" id="VAR_072962" description="In HH5." evidence="25">
    <original>L</original>
    <variation>F</variation>
    <location>
        <position position="1375"/>
    </location>
</feature>
<feature type="sequence variant" id="VAR_068129" description="In CHARGES." evidence="17">
    <original>Q</original>
    <variation>H</variation>
    <location>
        <position position="1395"/>
    </location>
</feature>
<feature type="sequence variant" id="VAR_068130" description="In CHARGES; uncertain significance; dbSNP:rs770166812." evidence="17">
    <original>T</original>
    <variation>R</variation>
    <location>
        <position position="1416"/>
    </location>
</feature>
<feature type="sequence variant" id="VAR_068131" description="In CHARGES; uncertain significance." evidence="17">
    <original>K</original>
    <variation>Q</variation>
    <location>
        <position position="1457"/>
    </location>
</feature>
<feature type="sequence variant" id="VAR_068132" description="In CHARGES; uncertain significance; dbSNP:rs1804992639." evidence="17">
    <original>F</original>
    <variation>C</variation>
    <location>
        <position position="1576"/>
    </location>
</feature>
<feature type="sequence variant" id="VAR_072963" description="In CHARGES; uncertain significance; dbSNP:rs773187713." evidence="13">
    <original>R</original>
    <variation>W</variation>
    <location>
        <position position="1592"/>
    </location>
</feature>
<feature type="sequence variant" id="VAR_068399" evidence="21">
    <original>P</original>
    <variation>S</variation>
    <location>
        <position position="1594"/>
    </location>
</feature>
<feature type="sequence variant" id="VAR_068400" description="In CHARGES; uncertain significance; dbSNP:rs1804999304." evidence="21">
    <original>G</original>
    <variation>D</variation>
    <location>
        <position position="1617"/>
    </location>
</feature>
<feature type="sequence variant" id="VAR_068133" description="In CHARGES; uncertain significance; dbSNP:rs886040993." evidence="17">
    <original>G</original>
    <variation>S</variation>
    <location>
        <position position="1617"/>
    </location>
</feature>
<feature type="sequence variant" id="VAR_068401" description="In CHARGES; uncertain significance." evidence="21">
    <original>G</original>
    <variation>V</variation>
    <location>
        <position position="1619"/>
    </location>
</feature>
<feature type="sequence variant" id="VAR_068402" description="In dbSNP:rs61737194." evidence="21">
    <original>A</original>
    <variation>V</variation>
    <location>
        <position position="1672"/>
    </location>
</feature>
<feature type="sequence variant" id="VAR_068134" description="In CHARGES and HH5; dbSNP:rs1554602465." evidence="17 21 22 25">
    <original>G</original>
    <variation>S</variation>
    <location>
        <position position="1684"/>
    </location>
</feature>
<feature type="sequence variant" id="VAR_068135" description="In CHARGES." evidence="17">
    <original>L</original>
    <variation>R</variation>
    <location>
        <position position="1739"/>
    </location>
</feature>
<feature type="sequence variant" id="VAR_072964" description="In CHARGES." evidence="13">
    <original>V</original>
    <variation>D</variation>
    <location>
        <position position="1742"/>
    </location>
</feature>
<feature type="sequence variant" id="VAR_069034" description="In CHARGES; uncertain significance." evidence="9">
    <original>L</original>
    <variation>P</variation>
    <location>
        <position position="1745"/>
    </location>
</feature>
<feature type="sequence variant" id="VAR_068136" description="In CHARGES; uncertain significance." evidence="17">
    <original>D</original>
    <variation>E</variation>
    <location>
        <position position="1791"/>
    </location>
</feature>
<feature type="sequence variant" id="VAR_068403" description="In CHARGES." evidence="21">
    <original>G</original>
    <variation>V</variation>
    <location>
        <position position="1797"/>
    </location>
</feature>
<feature type="sequence variant" id="VAR_068137" description="In CHARGES; dbSNP:rs1805405695." evidence="18">
    <original>G</original>
    <variation>D</variation>
    <location>
        <position position="1802"/>
    </location>
</feature>
<feature type="sequence variant" id="VAR_068404" description="In CHARGES." evidence="21">
    <original>D</original>
    <variation>G</variation>
    <location>
        <position position="1812"/>
    </location>
</feature>
<feature type="sequence variant" id="VAR_068405" description="In CHARGES." evidence="21">
    <original>D</original>
    <variation>H</variation>
    <location>
        <position position="1812"/>
    </location>
</feature>
<feature type="sequence variant" id="VAR_033248" description="In CHARGES." evidence="8 21">
    <original>L</original>
    <variation>P</variation>
    <location>
        <position position="1815"/>
    </location>
</feature>
<feature type="sequence variant" id="VAR_072965" description="In HH5; dbSNP:rs759918327." evidence="25">
    <original>M</original>
    <variation>V</variation>
    <location>
        <position position="1838"/>
    </location>
</feature>
<feature type="sequence variant" id="VAR_068138" description="In CHARGES; uncertain significance; dbSNP:rs2150805872." evidence="17 21">
    <original>D</original>
    <variation>G</variation>
    <location>
        <position position="1866"/>
    </location>
</feature>
<feature type="sequence variant" id="VAR_072966" description="In HH5; dbSNP:rs2150807646." evidence="25">
    <original>R</original>
    <variation>G</variation>
    <location>
        <position position="1912"/>
    </location>
</feature>
<feature type="sequence variant" id="VAR_068139" description="In CHARGES; uncertain significance; dbSNP:rs201423234." evidence="17">
    <original>A</original>
    <variation>T</variation>
    <location>
        <position position="1950"/>
    </location>
</feature>
<feature type="sequence variant" id="VAR_068406" description="In dbSNP:rs1013310877." evidence="21">
    <original>A</original>
    <variation>G</variation>
    <location>
        <position position="1972"/>
    </location>
</feature>
<feature type="sequence variant" id="VAR_068407" description="In dbSNP:rs886063038." evidence="21">
    <original>R</original>
    <variation>W</variation>
    <location>
        <position position="2062"/>
    </location>
</feature>
<feature type="sequence variant" id="VAR_072967" description="In HH5; dbSNP:rs1064794250." evidence="25">
    <original>R</original>
    <variation>C</variation>
    <location>
        <position position="2065"/>
    </location>
</feature>
<feature type="sequence variant" id="VAR_068140" description="In CHARGES; uncertain significance; dbSNP:rs1197494895." evidence="17">
    <original>R</original>
    <variation>H</variation>
    <location>
        <position position="2065"/>
    </location>
</feature>
<feature type="sequence variant" id="VAR_068141" description="In CHARGES." evidence="19">
    <original>R</original>
    <variation>S</variation>
    <location>
        <position position="2065"/>
    </location>
</feature>
<feature type="sequence variant" id="VAR_068408" description="In CHARGES and HH5; uncertain significance." evidence="21 25">
    <original>L</original>
    <variation>P</variation>
    <location>
        <position position="2074"/>
    </location>
</feature>
<feature type="sequence variant" id="VAR_069035" description="Found in a patient with cleft lip and palate; uncertain significance." evidence="9">
    <original>R</original>
    <variation>K</variation>
    <location>
        <position position="2077"/>
    </location>
</feature>
<feature type="sequence variant" id="VAR_068142" description="In CHARGES; uncertain significance; dbSNP:rs201083157." evidence="17">
    <original>S</original>
    <variation>G</variation>
    <location>
        <position position="2084"/>
    </location>
</feature>
<feature type="sequence variant" id="VAR_068409" description="In CHARGES; no effect on interaction with CHD8." evidence="16 21">
    <original>W</original>
    <variation>R</variation>
    <location>
        <position position="2091"/>
    </location>
</feature>
<feature type="sequence variant" id="VAR_033249" description="In CHARGES; no effect on interaction with CHD8; dbSNP:rs587783451." evidence="8 16">
    <original>H</original>
    <variation>R</variation>
    <location>
        <position position="2096"/>
    </location>
</feature>
<feature type="sequence variant" id="VAR_068410" description="In CHARGES; uncertain significance." evidence="21">
    <original>D</original>
    <variation>G</variation>
    <location>
        <position position="2097"/>
    </location>
</feature>
<feature type="sequence variant" id="VAR_068411" description="In CHARGES; uncertain significance; has no effect on interaction with CHD8." evidence="9 16 21">
    <original>V</original>
    <variation>I</variation>
    <location>
        <position position="2102"/>
    </location>
</feature>
<feature type="sequence variant" id="VAR_068143" description="In CHARGES; uncertain significance; dbSNP:rs794727555." evidence="17">
    <original>G</original>
    <variation>D</variation>
    <location>
        <position position="2103"/>
    </location>
</feature>
<feature type="sequence variant" id="VAR_068144" description="In CHARGES and HH5; has no effect on interaction with CHD8; dbSNP:rs121434343." evidence="12 16 21 25">
    <original>G</original>
    <variation>R</variation>
    <location>
        <position position="2108"/>
    </location>
</feature>
<feature type="sequence variant" id="VAR_078703" description="In CHARGES." evidence="26">
    <original>G</original>
    <variation>W</variation>
    <location>
        <position position="2108"/>
    </location>
</feature>
<feature type="sequence variant" id="VAR_068412" description="Found in a patient with cleft lip and palate; uncertain significance; dbSNP:rs758409717." evidence="9 21">
    <original>T</original>
    <variation>M</variation>
    <location>
        <position position="2112"/>
    </location>
</feature>
<feature type="sequence variant" id="VAR_068145" description="In CHARGES." evidence="15 17">
    <original>I</original>
    <variation>N</variation>
    <location>
        <position position="2116"/>
    </location>
</feature>
<feature type="sequence variant" id="VAR_068413" evidence="21">
    <original>N</original>
    <variation>D</variation>
    <location>
        <position position="2118"/>
    </location>
</feature>
<feature type="sequence variant" id="VAR_068146" description="In dbSNP:rs61753399." evidence="17 25">
    <original>A</original>
    <variation>T</variation>
    <location>
        <position position="2160"/>
    </location>
</feature>
<feature type="sequence variant" id="VAR_068147" description="In dbSNP:rs374408098." evidence="17 21">
    <original>A</original>
    <variation>T</variation>
    <location>
        <position position="2225"/>
    </location>
</feature>
<feature type="sequence variant" id="VAR_068414" description="In CHARGES and HH5; uncertain significance; dbSNP:rs200806228." evidence="21 25">
    <original>A</original>
    <variation>T</variation>
    <location>
        <position position="2259"/>
    </location>
</feature>
<feature type="sequence variant" id="VAR_068415" description="In CHARGES." evidence="21">
    <original>G</original>
    <variation>A</variation>
    <location>
        <position position="2286"/>
    </location>
</feature>
<feature type="sequence variant" id="VAR_068416" description="In CHARGES; uncertain significance." evidence="21">
    <original>K</original>
    <variation>T</variation>
    <location>
        <position position="2312"/>
    </location>
</feature>
<feature type="sequence variant" id="VAR_068148" description="In CHARGES; uncertain significance; dbSNP:rs121434341." evidence="9 17">
    <original>R</original>
    <variation>C</variation>
    <location>
        <position position="2319"/>
    </location>
</feature>
<feature type="sequence variant" id="VAR_033250" description="In CHARGES; dbSNP:rs121434341." evidence="8">
    <original>R</original>
    <variation>S</variation>
    <location>
        <position position="2319"/>
    </location>
</feature>
<feature type="sequence variant" id="VAR_068149" description="In dbSNP:rs77704609." evidence="17 21">
    <original>G</original>
    <variation>A</variation>
    <location>
        <position position="2330"/>
    </location>
</feature>
<feature type="sequence variant" id="VAR_068417" description="In CHARGES; uncertain significance; dbSNP:rs541818422." evidence="21">
    <original>L</original>
    <variation>R</variation>
    <location>
        <position position="2366"/>
    </location>
</feature>
<feature type="sequence variant" id="VAR_072968" description="In HH5." evidence="25">
    <original>R</original>
    <variation>G</variation>
    <location>
        <position position="2398"/>
    </location>
</feature>
<feature type="sequence variant" id="VAR_068418" description="In dbSNP:rs41315633." evidence="21">
    <original>A</original>
    <variation>S</variation>
    <location>
        <position position="2415"/>
    </location>
</feature>
<feature type="sequence variant" id="VAR_068150" description="In CHARGES." evidence="22">
    <original>R</original>
    <variation>G</variation>
    <location>
        <position position="2418"/>
    </location>
</feature>
<feature type="sequence variant" id="VAR_068419" description="In CHARGES; uncertain significance." evidence="21">
    <original>K</original>
    <variation>E</variation>
    <location>
        <position position="2464"/>
    </location>
</feature>
<feature type="sequence variant" id="VAR_068420" description="In dbSNP:rs398124324." evidence="21">
    <original>G</original>
    <variation>D</variation>
    <location>
        <position position="2488"/>
    </location>
</feature>
<feature type="sequence variant" id="VAR_068421" description="In dbSNP:rs755492299." evidence="21">
    <original>R</original>
    <variation>C</variation>
    <location>
        <position position="2491"/>
    </location>
</feature>
<feature type="sequence variant" id="VAR_068151" description="In CHARGES; uncertain significance; dbSNP:rs547209998." evidence="17">
    <original>R</original>
    <variation>S</variation>
    <location>
        <position position="2495"/>
    </location>
</feature>
<feature type="sequence variant" id="VAR_068152" description="In dbSNP:rs192129249." evidence="17 25">
    <original>M</original>
    <variation>L</variation>
    <location>
        <position position="2527"/>
    </location>
</feature>
<feature type="sequence variant" id="VAR_068153" description="In dbSNP:rs747082615." evidence="21 22">
    <original>R</original>
    <variation>Q</variation>
    <location>
        <position position="2653"/>
    </location>
</feature>
<feature type="sequence variant" id="VAR_068154" description="In CHARGES; uncertain significance; dbSNP:rs201319489." evidence="17">
    <original>P</original>
    <variation>S</variation>
    <location>
        <position position="2683"/>
    </location>
</feature>
<feature type="sequence variant" id="VAR_068155" description="In CHARGES; uncertain significance; dbSNP:rs1373315351." evidence="17">
    <original>R</original>
    <variation>C</variation>
    <location>
        <position position="2702"/>
    </location>
</feature>
<feature type="sequence variant" id="VAR_068422" description="In dbSNP:rs113877656." evidence="21">
    <original>I</original>
    <variation>V</variation>
    <location>
        <position position="2725"/>
    </location>
</feature>
<feature type="sequence variant" id="VAR_068156" description="In CHARGES; uncertain significance; dbSNP:rs370231679." evidence="17">
    <original>A</original>
    <variation>T</variation>
    <location>
        <position position="2733"/>
    </location>
</feature>
<feature type="sequence variant" id="VAR_033251" description="In dbSNP:rs3750308." evidence="21">
    <original>F</original>
    <variation>L</variation>
    <location>
        <position position="2750"/>
    </location>
</feature>
<feature type="sequence variant" id="VAR_068423" description="In dbSNP:rs775132352." evidence="21">
    <original>A</original>
    <variation>V</variation>
    <location>
        <position position="2780"/>
    </location>
</feature>
<feature type="sequence variant" id="VAR_054625" description="In dbSNP:rs200140270." evidence="14 21">
    <original>A</original>
    <variation>T</variation>
    <location>
        <position position="2789"/>
    </location>
</feature>
<feature type="sequence variant" id="VAR_068157" description="In dbSNP:rs45521933." evidence="17">
    <original>L</original>
    <variation>V</variation>
    <location>
        <position position="2806"/>
    </location>
</feature>
<feature type="sequence variant" id="VAR_072969" description="In HH5." evidence="25">
    <original>Q</original>
    <variation>P</variation>
    <location>
        <position position="2833"/>
    </location>
</feature>
<feature type="sequence variant" id="VAR_068158" evidence="17 21">
    <original>S</original>
    <variation>A</variation>
    <location>
        <position position="2857"/>
    </location>
</feature>
<feature type="sequence variant" id="VAR_054626" description="In HH5; phenotype consistent with normosmic idiopathic hypogonadotropic hypogonadism; dbSNP:rs113938624." evidence="14">
    <original>P</original>
    <variation>L</variation>
    <location>
        <position position="2880"/>
    </location>
</feature>
<feature type="sequence variant" id="VAR_068159" description="In CHARGES; uncertain significance; dbSNP:rs370271088." evidence="17">
    <original>V</original>
    <variation>M</variation>
    <location>
        <position position="2931"/>
    </location>
</feature>
<feature type="sequence variant" id="VAR_054627" description="In HH5; phenotype consistent with Kallmann syndrome; dbSNP:rs1467824778." evidence="14">
    <original>K</original>
    <variation>E</variation>
    <location>
        <position position="2948"/>
    </location>
</feature>
<feature type="sequence variant" id="VAR_068160" description="In dbSNP:rs184814820." evidence="17">
    <original>L</original>
    <variation>F</variation>
    <location>
        <position position="2984"/>
    </location>
</feature>
<feature type="sequence conflict" description="In Ref. 1; ACY35999." evidence="31" ref="1">
    <original>M</original>
    <variation>T</variation>
    <location>
        <position position="80"/>
    </location>
</feature>
<feature type="sequence conflict" description="In Ref. 1; ACY35999." evidence="31" ref="1">
    <original>V</original>
    <variation>A</variation>
    <location>
        <position position="323"/>
    </location>
</feature>
<feature type="sequence conflict" description="In Ref. 1; ACY35999." evidence="31" ref="1">
    <original>T</original>
    <variation>A</variation>
    <location>
        <position position="408"/>
    </location>
</feature>
<feature type="sequence conflict" description="In Ref. 5; BAA91116." evidence="31" ref="5">
    <original>D</original>
    <variation>G</variation>
    <location>
        <position position="915"/>
    </location>
</feature>
<feature type="sequence conflict" description="In Ref. 1; ACY35999." evidence="31" ref="1">
    <original>K</original>
    <variation>E</variation>
    <location>
        <position position="2846"/>
    </location>
</feature>
<feature type="strand" evidence="38">
    <location>
        <begin position="2571"/>
        <end position="2573"/>
    </location>
</feature>
<feature type="turn" evidence="38">
    <location>
        <begin position="2574"/>
        <end position="2577"/>
    </location>
</feature>
<feature type="strand" evidence="38">
    <location>
        <begin position="2578"/>
        <end position="2580"/>
    </location>
</feature>
<feature type="helix" evidence="39">
    <location>
        <begin position="2582"/>
        <end position="2584"/>
    </location>
</feature>
<feature type="helix" evidence="38">
    <location>
        <begin position="2588"/>
        <end position="2597"/>
    </location>
</feature>
<feature type="strand" evidence="38">
    <location>
        <begin position="2601"/>
        <end position="2604"/>
    </location>
</feature>
<feature type="turn" evidence="38">
    <location>
        <begin position="2612"/>
        <end position="2615"/>
    </location>
</feature>
<feature type="helix" evidence="40">
    <location>
        <begin position="2633"/>
        <end position="2635"/>
    </location>
</feature>
<feature type="helix" evidence="40">
    <location>
        <begin position="2638"/>
        <end position="2640"/>
    </location>
</feature>
<feature type="turn" evidence="40">
    <location>
        <begin position="2641"/>
        <end position="2644"/>
    </location>
</feature>
<feature type="strand" evidence="40">
    <location>
        <begin position="2649"/>
        <end position="2654"/>
    </location>
</feature>
<feature type="strand" evidence="40">
    <location>
        <begin position="2660"/>
        <end position="2663"/>
    </location>
</feature>
<feature type="helix" evidence="40">
    <location>
        <begin position="2666"/>
        <end position="2668"/>
    </location>
</feature>
<feature type="helix" evidence="40">
    <location>
        <begin position="2669"/>
        <end position="2675"/>
    </location>
</feature>
<feature type="strand" evidence="40">
    <location>
        <begin position="2679"/>
        <end position="2681"/>
    </location>
</feature>
<feature type="helix" evidence="40">
    <location>
        <begin position="2683"/>
        <end position="2692"/>
    </location>
</feature>
<feature type="strand" evidence="40">
    <location>
        <begin position="2693"/>
        <end position="2695"/>
    </location>
</feature>
<feature type="helix" evidence="40">
    <location>
        <begin position="2697"/>
        <end position="2702"/>
    </location>
</feature>
<organism>
    <name type="scientific">Homo sapiens</name>
    <name type="common">Human</name>
    <dbReference type="NCBI Taxonomy" id="9606"/>
    <lineage>
        <taxon>Eukaryota</taxon>
        <taxon>Metazoa</taxon>
        <taxon>Chordata</taxon>
        <taxon>Craniata</taxon>
        <taxon>Vertebrata</taxon>
        <taxon>Euteleostomi</taxon>
        <taxon>Mammalia</taxon>
        <taxon>Eutheria</taxon>
        <taxon>Euarchontoglires</taxon>
        <taxon>Primates</taxon>
        <taxon>Haplorrhini</taxon>
        <taxon>Catarrhini</taxon>
        <taxon>Hominidae</taxon>
        <taxon>Homo</taxon>
    </lineage>
</organism>
<keyword id="KW-0002">3D-structure</keyword>
<keyword id="KW-0025">Alternative splicing</keyword>
<keyword id="KW-0067">ATP-binding</keyword>
<keyword id="KW-0156">Chromatin regulator</keyword>
<keyword id="KW-0175">Coiled coil</keyword>
<keyword id="KW-0225">Disease variant</keyword>
<keyword id="KW-0238">DNA-binding</keyword>
<keyword id="KW-0378">Hydrolase</keyword>
<keyword id="KW-1016">Hypogonadotropic hypogonadism</keyword>
<keyword id="KW-0956">Kallmann syndrome</keyword>
<keyword id="KW-0488">Methylation</keyword>
<keyword id="KW-0547">Nucleotide-binding</keyword>
<keyword id="KW-0539">Nucleus</keyword>
<keyword id="KW-0597">Phosphoprotein</keyword>
<keyword id="KW-1267">Proteomics identification</keyword>
<keyword id="KW-1185">Reference proteome</keyword>
<keyword id="KW-0677">Repeat</keyword>
<keyword id="KW-0698">rRNA processing</keyword>
<keyword id="KW-0804">Transcription</keyword>
<keyword id="KW-0805">Transcription regulation</keyword>
<protein>
    <recommendedName>
        <fullName>Chromodomain-helicase-DNA-binding protein 7</fullName>
        <shortName>CHD-7</shortName>
        <ecNumber evidence="27">3.6.4.-</ecNumber>
    </recommendedName>
    <alternativeName>
        <fullName>ATP-dependent helicase CHD7</fullName>
    </alternativeName>
</protein>